<proteinExistence type="evidence at protein level"/>
<comment type="function">
    <text evidence="2 8 12 13 18 19 20 21 23 25 26">Serine/threonine-protein kinase that acts downstream of ERK (MAPK1/ERK2 and MAPK3/ERK1) signaling and mediates mitogenic and stress-induced activation of the transcription factors CREB1, ETV1/ER81 and NR4A1/NUR77, regulates translation through RPS6 and EIF4B phosphorylation, and mediates cellular proliferation, survival, and differentiation by modulating mTOR signaling and repressing pro-apoptotic function of BAD and DAPK1 (PubMed:16213824, PubMed:16223362, PubMed:17360704, PubMed:9770464). In fibroblast, is required for EGF-stimulated phosphorylation of CREB1 and histone H3 at 'Ser-10', which results in the subsequent transcriptional activation of several immediate-early genes (PubMed:10436156, PubMed:9770464). In response to mitogenic stimulation (EGF and PMA), phosphorylates and activates NR4A1/NUR77 and ETV1/ER81 transcription factors and the cofactor CREBBP (PubMed:16223362). Upon insulin-derived signal, acts indirectly on the transcription regulation of several genes by phosphorylating GSK3B at 'Ser-9' and inhibiting its activity (PubMed:8250835). Phosphorylates RPS6 in response to serum or EGF via an mTOR-independent mechanism and promotes translation initiation by facilitating assembly of the preinitiation complex (PubMed:17360704). In response to insulin, phosphorylates EIF4B, enhancing EIF4B affinity for the EIF3 complex and stimulating cap-dependent translation (PubMed:18508509, PubMed:18813292). Is involved in the mTOR nutrient-sensing pathway by directly phosphorylating TSC2 at 'Ser-1798', which potently inhibits TSC2 ability to suppress mTOR signaling, and mediates phosphorylation of RPTOR, which regulates mTORC1 activity and may promote rapamycin-sensitive signaling independently of the PI3K/AKT pathway (PubMed:18722121). Mediates cell survival by phosphorylating the pro-apoptotic proteins BAD and DAPK1 and suppressing their pro-apoptotic function (PubMed:16213824). Promotes the survival of hepatic stellate cells by phosphorylating CEBPB in response to the hepatotoxin carbon tetrachloride (CCl4) (PubMed:18508509, PubMed:18813292). Is involved in cell cycle regulation by phosphorylating the CDK inhibitor CDKN1B, which promotes CDKN1B association with 14-3-3 proteins and prevents its translocation to the nucleus and inhibition of G1 progression (By similarity). In LPS-stimulated dendritic cells, is involved in TLR4-induced macropinocytosis, and in myeloma cells, acts as effector of FGFR3-mediated transformation signaling, after direct phosphorylation at Tyr-529 by FGFR3 (By similarity). Negatively regulates EGF-induced MAPK1/3 phosphorylation via phosphorylation of SOS1 (By similarity). Phosphorylates SOS1 at 'Ser-1134' and 'Ser-1161' that create YWHAB and YWHAE binding sites and which contribute to the negative regulation of MAPK1/3 phosphorylation (By similarity). Phosphorylates EPHA2 at 'Ser-897', the RPS6KA-EPHA2 signaling pathway controls cell migration (PubMed:26158630). Acts as a regulator of osteoblast differentiation by mediating phosphorylation of ATF4, thereby promoting ATF4 transactivation activity (By similarity).</text>
</comment>
<comment type="catalytic activity">
    <reaction evidence="16">
        <text>L-seryl-[protein] + ATP = O-phospho-L-seryl-[protein] + ADP + H(+)</text>
        <dbReference type="Rhea" id="RHEA:17989"/>
        <dbReference type="Rhea" id="RHEA-COMP:9863"/>
        <dbReference type="Rhea" id="RHEA-COMP:11604"/>
        <dbReference type="ChEBI" id="CHEBI:15378"/>
        <dbReference type="ChEBI" id="CHEBI:29999"/>
        <dbReference type="ChEBI" id="CHEBI:30616"/>
        <dbReference type="ChEBI" id="CHEBI:83421"/>
        <dbReference type="ChEBI" id="CHEBI:456216"/>
        <dbReference type="EC" id="2.7.11.1"/>
    </reaction>
</comment>
<comment type="catalytic activity">
    <reaction>
        <text>L-threonyl-[protein] + ATP = O-phospho-L-threonyl-[protein] + ADP + H(+)</text>
        <dbReference type="Rhea" id="RHEA:46608"/>
        <dbReference type="Rhea" id="RHEA-COMP:11060"/>
        <dbReference type="Rhea" id="RHEA-COMP:11605"/>
        <dbReference type="ChEBI" id="CHEBI:15378"/>
        <dbReference type="ChEBI" id="CHEBI:30013"/>
        <dbReference type="ChEBI" id="CHEBI:30616"/>
        <dbReference type="ChEBI" id="CHEBI:61977"/>
        <dbReference type="ChEBI" id="CHEBI:456216"/>
        <dbReference type="EC" id="2.7.11.1"/>
    </reaction>
</comment>
<comment type="cofactor">
    <cofactor evidence="1">
        <name>Mg(2+)</name>
        <dbReference type="ChEBI" id="CHEBI:18420"/>
    </cofactor>
</comment>
<comment type="activity regulation">
    <text>Upon extracellular signal or mitogen stimulation, phosphorylated at Thr-577 in the C-terminal kinase domain (CTKD) by MAPK1/ERK2 and MAPK3/ERK1. The activated CTKD then autophosphorylates Ser-386, allowing binding of PDPK1, which in turn phosphorylates Ser-227 in the N-terminal kinase domain (NTDK) leading to the full activation of the protein and subsequent phosphorylation of the substrates by the NTKD.</text>
</comment>
<comment type="biophysicochemical properties">
    <kinetics>
        <KM evidence="16">3.56 uM for NFATC4</KM>
        <Vmax evidence="16">11.5 umol/min/ug enzyme toward ATP</Vmax>
    </kinetics>
</comment>
<comment type="subunit">
    <text evidence="1 16">Forms a complex with either MAPK1/ERK2 or MAPK3/ERK1 in quiescent cells. Transiently dissociates following mitogenic stimulation (By similarity). Interacts with NFATC4, ETV1/ER81 and FGFR1.</text>
</comment>
<comment type="interaction">
    <interactant intactId="EBI-1046616">
        <id>P51812</id>
    </interactant>
    <interactant intactId="EBI-10988864">
        <id>P46379-2</id>
        <label>BAG6</label>
    </interactant>
    <organismsDiffer>false</organismsDiffer>
    <experiments>3</experiments>
</comment>
<comment type="interaction">
    <interactant intactId="EBI-1046616">
        <id>P51812</id>
    </interactant>
    <interactant intactId="EBI-348169">
        <id>P67870</id>
        <label>CSNK2B</label>
    </interactant>
    <organismsDiffer>false</organismsDiffer>
    <experiments>7</experiments>
</comment>
<comment type="interaction">
    <interactant intactId="EBI-1046616">
        <id>P51812</id>
    </interactant>
    <interactant intactId="EBI-715087">
        <id>P09471</id>
        <label>GNAO1</label>
    </interactant>
    <organismsDiffer>false</organismsDiffer>
    <experiments>3</experiments>
</comment>
<comment type="interaction">
    <interactant intactId="EBI-1046616">
        <id>P51812</id>
    </interactant>
    <interactant intactId="EBI-352572">
        <id>P08238</id>
        <label>HSP90AB1</label>
    </interactant>
    <organismsDiffer>false</organismsDiffer>
    <experiments>3</experiments>
</comment>
<comment type="interaction">
    <interactant intactId="EBI-1046616">
        <id>P51812</id>
    </interactant>
    <interactant intactId="EBI-948266">
        <id>O14901</id>
        <label>KLF11</label>
    </interactant>
    <organismsDiffer>false</organismsDiffer>
    <experiments>3</experiments>
</comment>
<comment type="interaction">
    <interactant intactId="EBI-1046616">
        <id>P51812</id>
    </interactant>
    <interactant intactId="EBI-959949">
        <id>P28482</id>
        <label>MAPK1</label>
    </interactant>
    <organismsDiffer>false</organismsDiffer>
    <experiments>12</experiments>
</comment>
<comment type="interaction">
    <interactant intactId="EBI-1046616">
        <id>P51812</id>
    </interactant>
    <interactant intactId="EBI-11750983">
        <id>Q9HC98-4</id>
        <label>NEK6</label>
    </interactant>
    <organismsDiffer>false</organismsDiffer>
    <experiments>3</experiments>
</comment>
<comment type="interaction">
    <interactant intactId="EBI-1046616">
        <id>P51812</id>
    </interactant>
    <interactant intactId="EBI-9091052">
        <id>Q6P4D5-2</id>
        <label>PABIR3</label>
    </interactant>
    <organismsDiffer>false</organismsDiffer>
    <experiments>3</experiments>
</comment>
<comment type="interaction">
    <interactant intactId="EBI-1046616">
        <id>P51812</id>
    </interactant>
    <interactant intactId="EBI-9090282">
        <id>P27986-2</id>
        <label>PIK3R1</label>
    </interactant>
    <organismsDiffer>false</organismsDiffer>
    <experiments>3</experiments>
</comment>
<comment type="interaction">
    <interactant intactId="EBI-1046616">
        <id>P51812</id>
    </interactant>
    <interactant intactId="EBI-7082156">
        <id>Q7Z698</id>
        <label>SPRED2</label>
    </interactant>
    <organismsDiffer>false</organismsDiffer>
    <experiments>4</experiments>
</comment>
<comment type="interaction">
    <interactant intactId="EBI-1046616">
        <id>P51812</id>
    </interactant>
    <interactant intactId="EBI-26365850">
        <id>A1JU68</id>
        <label>yopM</label>
    </interactant>
    <organismsDiffer>true</organismsDiffer>
    <experiments>2</experiments>
</comment>
<comment type="subcellular location">
    <subcellularLocation>
        <location evidence="16">Nucleus</location>
    </subcellularLocation>
    <subcellularLocation>
        <location evidence="16">Cytoplasm</location>
    </subcellularLocation>
</comment>
<comment type="tissue specificity">
    <text>Expressed in many tissues, highest levels in skeletal muscle.</text>
</comment>
<comment type="PTM">
    <text>Activated by phosphorylation at Ser-227 by PDPK1. Autophosphorylated on Ser-386, as part of the activation process. May be phosphorylated at Thr-365 and Ser-369 by MAPK1/ERK2 and MAPK3/ERK1. Can also be activated via phosphorylation at Ser-386 by MAPKAPK2.</text>
</comment>
<comment type="PTM">
    <text>N-terminal myristoylation results in an activated kinase in the absence of added growth factors.</text>
</comment>
<comment type="disease" evidence="6 9 10 11 22 24">
    <disease id="DI-00313">
        <name>Coffin-Lowry syndrome</name>
        <acronym>CLS</acronym>
        <description>An X-linked disorder characterized by intellectual disability associated with facial and digital dysmorphisms, progressive skeletal malformations, growth retardation, hearing deficit and paroxysmal movement disorders.</description>
        <dbReference type="MIM" id="303600"/>
    </disease>
    <text>The disease is caused by variants affecting the gene represented in this entry.</text>
</comment>
<comment type="disease" evidence="7 15">
    <disease id="DI-03127">
        <name>Intellectual developmental disorder, X-linked 19</name>
        <acronym>XLID19</acronym>
        <description>A disorder characterized by significantly below average general intellectual functioning associated with impairments in adaptive behavior and manifested during the developmental period.</description>
        <dbReference type="MIM" id="300844"/>
    </disease>
    <text>The disease is caused by variants affecting the gene represented in this entry.</text>
</comment>
<comment type="similarity">
    <text evidence="27">Belongs to the protein kinase superfamily. AGC Ser/Thr protein kinase family. S6 kinase subfamily.</text>
</comment>
<comment type="sequence caution" evidence="27">
    <conflict type="erroneous initiation">
        <sequence resource="EMBL-CDS" id="BAD92170"/>
    </conflict>
    <text>Extended N-terminus.</text>
</comment>
<feature type="chain" id="PRO_0000086203" description="Ribosomal protein S6 kinase alpha-3">
    <location>
        <begin position="1"/>
        <end position="740"/>
    </location>
</feature>
<feature type="domain" description="Protein kinase 1" evidence="3">
    <location>
        <begin position="68"/>
        <end position="327"/>
    </location>
</feature>
<feature type="domain" description="AGC-kinase C-terminal" evidence="4">
    <location>
        <begin position="328"/>
        <end position="397"/>
    </location>
</feature>
<feature type="domain" description="Protein kinase 2" evidence="3">
    <location>
        <begin position="422"/>
        <end position="679"/>
    </location>
</feature>
<feature type="region of interest" description="Disordered" evidence="5">
    <location>
        <begin position="1"/>
        <end position="38"/>
    </location>
</feature>
<feature type="compositionally biased region" description="Polar residues" evidence="5">
    <location>
        <begin position="18"/>
        <end position="27"/>
    </location>
</feature>
<feature type="active site" description="Proton acceptor" evidence="1">
    <location>
        <position position="193"/>
    </location>
</feature>
<feature type="active site" description="Proton acceptor" evidence="1">
    <location>
        <position position="539"/>
    </location>
</feature>
<feature type="binding site" evidence="3">
    <location>
        <begin position="74"/>
        <end position="82"/>
    </location>
    <ligand>
        <name>ATP</name>
        <dbReference type="ChEBI" id="CHEBI:30616"/>
    </ligand>
</feature>
<feature type="binding site" evidence="3">
    <location>
        <position position="100"/>
    </location>
    <ligand>
        <name>ATP</name>
        <dbReference type="ChEBI" id="CHEBI:30616"/>
    </ligand>
</feature>
<feature type="binding site" evidence="3">
    <location>
        <begin position="428"/>
        <end position="436"/>
    </location>
    <ligand>
        <name>ATP</name>
        <dbReference type="ChEBI" id="CHEBI:30616"/>
    </ligand>
</feature>
<feature type="binding site" evidence="3">
    <location>
        <position position="451"/>
    </location>
    <ligand>
        <name>ATP</name>
        <dbReference type="ChEBI" id="CHEBI:30616"/>
    </ligand>
</feature>
<feature type="modified residue" description="Phosphoserine; by PDPK1" evidence="2 27">
    <location>
        <position position="227"/>
    </location>
</feature>
<feature type="modified residue" description="Phosphothreonine" evidence="29 30 31 34 35">
    <location>
        <position position="365"/>
    </location>
</feature>
<feature type="modified residue" description="Phosphoserine" evidence="29 30 31 34 35 36">
    <location>
        <position position="369"/>
    </location>
</feature>
<feature type="modified residue" description="Phosphoserine" evidence="29 30 31">
    <location>
        <position position="375"/>
    </location>
</feature>
<feature type="modified residue" description="Phosphoserine; by autocatalysis and MAPKAPK2" evidence="30 31 36">
    <location>
        <position position="386"/>
    </location>
</feature>
<feature type="modified residue" description="Phosphoserine" evidence="30 31 32 35 36">
    <location>
        <position position="415"/>
    </location>
</feature>
<feature type="modified residue" description="Phosphotyrosine; by FGFR3" evidence="2">
    <location>
        <position position="529"/>
    </location>
</feature>
<feature type="modified residue" description="Phosphoserine" evidence="30">
    <location>
        <position position="556"/>
    </location>
</feature>
<feature type="modified residue" description="Phosphoserine" evidence="28 30 31 33 35 36">
    <location>
        <position position="715"/>
    </location>
</feature>
<feature type="sequence variant" id="VAR_006188" description="In dbSNP:rs56218010." evidence="17 24">
    <original>I</original>
    <variation>S</variation>
    <location>
        <position position="38"/>
    </location>
</feature>
<feature type="sequence variant" id="VAR_006189" description="In CLS; dbSNP:rs122454124." evidence="22">
    <original>G</original>
    <variation>V</variation>
    <location>
        <position position="75"/>
    </location>
</feature>
<feature type="sequence variant" id="VAR_006190" description="In CLS; dbSNP:rs122454126." evidence="24">
    <original>V</original>
    <variation>F</variation>
    <location>
        <position position="82"/>
    </location>
</feature>
<feature type="sequence variant" id="VAR_006191" description="In CLS; dbSNP:rs122454127." evidence="6">
    <original>R</original>
    <variation>W</variation>
    <location>
        <position position="114"/>
    </location>
</feature>
<feature type="sequence variant" id="VAR_065892" description="In XLID19; dbSNP:rs387906703." evidence="15">
    <original>T</original>
    <variation>S</variation>
    <location>
        <position position="115"/>
    </location>
</feature>
<feature type="sequence variant" id="VAR_006192" description="In CLS." evidence="24">
    <original>H</original>
    <variation>Q</variation>
    <location>
        <position position="127"/>
    </location>
</feature>
<feature type="sequence variant" id="VAR_065893" description="In XLID19; dbSNP:rs398122813." evidence="15">
    <location>
        <position position="152"/>
    </location>
</feature>
<feature type="sequence variant" id="VAR_006193" description="In CLS." evidence="24">
    <original>D</original>
    <variation>Y</variation>
    <location>
        <position position="154"/>
    </location>
</feature>
<feature type="sequence variant" id="VAR_065894" description="In CLS; dbSNP:rs122454130." evidence="9">
    <original>I</original>
    <variation>K</variation>
    <location>
        <position position="189"/>
    </location>
</feature>
<feature type="sequence variant" id="VAR_065895" description="In XLID19." evidence="15">
    <location>
        <position position="202"/>
    </location>
</feature>
<feature type="sequence variant" id="VAR_006194" description="In CLS; dbSNP:rs879027948." evidence="24">
    <original>A</original>
    <variation>V</variation>
    <location>
        <position position="225"/>
    </location>
</feature>
<feature type="sequence variant" id="VAR_006195" description="In CLS; dbSNP:rs122454125." evidence="22">
    <original>S</original>
    <variation>A</variation>
    <location>
        <position position="227"/>
    </location>
</feature>
<feature type="sequence variant" id="VAR_065896" description="In CLS; dbSNP:rs122454131." evidence="10">
    <original>F</original>
    <variation>S</variation>
    <location>
        <position position="268"/>
    </location>
</feature>
<feature type="sequence variant" id="VAR_065897" description="In XLID19; kinase activity is decreased but not abolished; dbSNP:rs122454129." evidence="7">
    <original>R</original>
    <variation>W</variation>
    <location>
        <position position="383"/>
    </location>
</feature>
<feature type="sequence variant" id="VAR_035627" description="In a breast cancer sample; somatic mutation; dbSNP:rs148050184." evidence="14">
    <original>I</original>
    <variation>V</variation>
    <location>
        <position position="416"/>
    </location>
</feature>
<feature type="sequence variant" id="VAR_006196" description="In CLS." evidence="24">
    <original>G</original>
    <variation>D</variation>
    <location>
        <position position="431"/>
    </location>
</feature>
<feature type="sequence variant" id="VAR_065898" description="In CLS." evidence="11">
    <location>
        <position position="477"/>
    </location>
</feature>
<feature type="sequence variant" id="VAR_040629" description="In a gastric adenocarcinoma sample; somatic mutation; dbSNP:rs1271090915." evidence="17">
    <original>Y</original>
    <variation>C</variation>
    <location>
        <position position="483"/>
    </location>
</feature>
<feature type="sequence variant" id="VAR_040630" description="In a glioblastoma multiforme sample; somatic mutation." evidence="17">
    <original>L</original>
    <variation>F</variation>
    <location>
        <position position="608"/>
    </location>
</feature>
<feature type="sequence variant" id="VAR_040631" description="In dbSNP:rs35026425." evidence="17">
    <original>R</original>
    <variation>C</variation>
    <location>
        <position position="723"/>
    </location>
</feature>
<feature type="sequence variant" id="VAR_006197" description="In CLS; dbSNP:rs28935171." evidence="6">
    <original>R</original>
    <variation>Q</variation>
    <location>
        <position position="729"/>
    </location>
</feature>
<feature type="sequence conflict" description="In Ref. 5; AAH96303." evidence="27" ref="5">
    <original>S</original>
    <variation>L</variation>
    <location>
        <position position="89"/>
    </location>
</feature>
<feature type="sequence conflict" description="In Ref. 3; BAD92170." evidence="27" ref="3">
    <location>
        <position position="410"/>
    </location>
</feature>
<feature type="sequence conflict" description="In Ref. 6; AAC82495." evidence="27" ref="6">
    <original>V</original>
    <variation>L</variation>
    <location>
        <position position="424"/>
    </location>
</feature>
<feature type="sequence conflict" description="In Ref. 6; AAC82495." evidence="27" ref="6">
    <original>K</original>
    <variation>N</variation>
    <location>
        <position position="480"/>
    </location>
</feature>
<feature type="sequence conflict" description="In Ref. 6; AAC82495." evidence="27" ref="6">
    <location>
        <position position="494"/>
    </location>
</feature>
<feature type="strand" evidence="46">
    <location>
        <begin position="50"/>
        <end position="56"/>
    </location>
</feature>
<feature type="helix" evidence="43">
    <location>
        <begin position="65"/>
        <end position="67"/>
    </location>
</feature>
<feature type="strand" evidence="43">
    <location>
        <begin position="68"/>
        <end position="76"/>
    </location>
</feature>
<feature type="strand" evidence="43">
    <location>
        <begin position="78"/>
        <end position="87"/>
    </location>
</feature>
<feature type="turn" evidence="43">
    <location>
        <begin position="91"/>
        <end position="94"/>
    </location>
</feature>
<feature type="strand" evidence="43">
    <location>
        <begin position="96"/>
        <end position="104"/>
    </location>
</feature>
<feature type="turn" evidence="43">
    <location>
        <begin position="105"/>
        <end position="107"/>
    </location>
</feature>
<feature type="helix" evidence="43">
    <location>
        <begin position="109"/>
        <end position="124"/>
    </location>
</feature>
<feature type="strand" evidence="43">
    <location>
        <begin position="133"/>
        <end position="139"/>
    </location>
</feature>
<feature type="strand" evidence="43">
    <location>
        <begin position="142"/>
        <end position="148"/>
    </location>
</feature>
<feature type="strand" evidence="44">
    <location>
        <begin position="152"/>
        <end position="154"/>
    </location>
</feature>
<feature type="helix" evidence="43">
    <location>
        <begin position="155"/>
        <end position="162"/>
    </location>
</feature>
<feature type="helix" evidence="43">
    <location>
        <begin position="167"/>
        <end position="186"/>
    </location>
</feature>
<feature type="strand" evidence="45">
    <location>
        <begin position="189"/>
        <end position="192"/>
    </location>
</feature>
<feature type="helix" evidence="43">
    <location>
        <begin position="196"/>
        <end position="198"/>
    </location>
</feature>
<feature type="strand" evidence="43">
    <location>
        <begin position="199"/>
        <end position="201"/>
    </location>
</feature>
<feature type="strand" evidence="42">
    <location>
        <begin position="203"/>
        <end position="205"/>
    </location>
</feature>
<feature type="strand" evidence="43">
    <location>
        <begin position="207"/>
        <end position="209"/>
    </location>
</feature>
<feature type="strand" evidence="45">
    <location>
        <begin position="214"/>
        <end position="216"/>
    </location>
</feature>
<feature type="helix" evidence="42">
    <location>
        <begin position="217"/>
        <end position="223"/>
    </location>
</feature>
<feature type="turn" evidence="42">
    <location>
        <begin position="224"/>
        <end position="226"/>
    </location>
</feature>
<feature type="helix" evidence="43">
    <location>
        <begin position="232"/>
        <end position="234"/>
    </location>
</feature>
<feature type="helix" evidence="43">
    <location>
        <begin position="237"/>
        <end position="240"/>
    </location>
</feature>
<feature type="helix" evidence="43">
    <location>
        <begin position="249"/>
        <end position="263"/>
    </location>
</feature>
<feature type="helix" evidence="43">
    <location>
        <begin position="273"/>
        <end position="282"/>
    </location>
</feature>
<feature type="helix" evidence="43">
    <location>
        <begin position="293"/>
        <end position="302"/>
    </location>
</feature>
<feature type="strand" evidence="46">
    <location>
        <begin position="304"/>
        <end position="306"/>
    </location>
</feature>
<feature type="helix" evidence="43">
    <location>
        <begin position="307"/>
        <end position="309"/>
    </location>
</feature>
<feature type="turn" evidence="43">
    <location>
        <begin position="315"/>
        <end position="318"/>
    </location>
</feature>
<feature type="helix" evidence="43">
    <location>
        <begin position="319"/>
        <end position="322"/>
    </location>
</feature>
<feature type="helix" evidence="43">
    <location>
        <begin position="325"/>
        <end position="327"/>
    </location>
</feature>
<feature type="helix" evidence="43">
    <location>
        <begin position="332"/>
        <end position="336"/>
    </location>
</feature>
<feature type="helix" evidence="45">
    <location>
        <begin position="351"/>
        <end position="353"/>
    </location>
</feature>
<feature type="strand" evidence="40">
    <location>
        <begin position="409"/>
        <end position="411"/>
    </location>
</feature>
<feature type="helix" evidence="38">
    <location>
        <begin position="412"/>
        <end position="414"/>
    </location>
</feature>
<feature type="turn" evidence="37">
    <location>
        <begin position="419"/>
        <end position="421"/>
    </location>
</feature>
<feature type="strand" evidence="37">
    <location>
        <begin position="422"/>
        <end position="430"/>
    </location>
</feature>
<feature type="strand" evidence="37">
    <location>
        <begin position="432"/>
        <end position="441"/>
    </location>
</feature>
<feature type="turn" evidence="37">
    <location>
        <begin position="442"/>
        <end position="445"/>
    </location>
</feature>
<feature type="strand" evidence="37">
    <location>
        <begin position="446"/>
        <end position="454"/>
    </location>
</feature>
<feature type="turn" evidence="37">
    <location>
        <begin position="455"/>
        <end position="457"/>
    </location>
</feature>
<feature type="helix" evidence="37">
    <location>
        <begin position="461"/>
        <end position="470"/>
    </location>
</feature>
<feature type="strand" evidence="37">
    <location>
        <begin position="479"/>
        <end position="484"/>
    </location>
</feature>
<feature type="strand" evidence="37">
    <location>
        <begin position="486"/>
        <end position="494"/>
    </location>
</feature>
<feature type="helix" evidence="37">
    <location>
        <begin position="501"/>
        <end position="506"/>
    </location>
</feature>
<feature type="helix" evidence="37">
    <location>
        <begin position="513"/>
        <end position="532"/>
    </location>
</feature>
<feature type="helix" evidence="37">
    <location>
        <begin position="542"/>
        <end position="544"/>
    </location>
</feature>
<feature type="strand" evidence="37">
    <location>
        <begin position="545"/>
        <end position="551"/>
    </location>
</feature>
<feature type="helix" evidence="37">
    <location>
        <begin position="554"/>
        <end position="556"/>
    </location>
</feature>
<feature type="strand" evidence="37">
    <location>
        <begin position="557"/>
        <end position="559"/>
    </location>
</feature>
<feature type="helix" evidence="47">
    <location>
        <begin position="571"/>
        <end position="573"/>
    </location>
</feature>
<feature type="helix" evidence="37">
    <location>
        <begin position="587"/>
        <end position="613"/>
    </location>
</feature>
<feature type="helix" evidence="37">
    <location>
        <begin position="626"/>
        <end position="635"/>
    </location>
</feature>
<feature type="helix" evidence="38">
    <location>
        <begin position="643"/>
        <end position="645"/>
    </location>
</feature>
<feature type="strand" evidence="39">
    <location>
        <begin position="646"/>
        <end position="648"/>
    </location>
</feature>
<feature type="helix" evidence="37">
    <location>
        <begin position="650"/>
        <end position="659"/>
    </location>
</feature>
<feature type="turn" evidence="37">
    <location>
        <begin position="664"/>
        <end position="666"/>
    </location>
</feature>
<feature type="helix" evidence="37">
    <location>
        <begin position="670"/>
        <end position="673"/>
    </location>
</feature>
<feature type="helix" evidence="37">
    <location>
        <begin position="677"/>
        <end position="680"/>
    </location>
</feature>
<feature type="helix" evidence="37">
    <location>
        <begin position="682"/>
        <end position="684"/>
    </location>
</feature>
<feature type="helix" evidence="37">
    <location>
        <begin position="696"/>
        <end position="710"/>
    </location>
</feature>
<feature type="helix" evidence="41">
    <location>
        <begin position="711"/>
        <end position="713"/>
    </location>
</feature>
<dbReference type="EC" id="2.7.11.1" evidence="16"/>
<dbReference type="EMBL" id="U08316">
    <property type="protein sequence ID" value="AAA81952.1"/>
    <property type="molecule type" value="mRNA"/>
</dbReference>
<dbReference type="EMBL" id="AK313932">
    <property type="protein sequence ID" value="BAG36651.1"/>
    <property type="molecule type" value="mRNA"/>
</dbReference>
<dbReference type="EMBL" id="AB208933">
    <property type="protein sequence ID" value="BAD92170.1"/>
    <property type="status" value="ALT_INIT"/>
    <property type="molecule type" value="mRNA"/>
</dbReference>
<dbReference type="EMBL" id="AL732366">
    <property type="status" value="NOT_ANNOTATED_CDS"/>
    <property type="molecule type" value="Genomic_DNA"/>
</dbReference>
<dbReference type="EMBL" id="AL807772">
    <property type="status" value="NOT_ANNOTATED_CDS"/>
    <property type="molecule type" value="Genomic_DNA"/>
</dbReference>
<dbReference type="EMBL" id="BC096301">
    <property type="protein sequence ID" value="AAH96301.1"/>
    <property type="molecule type" value="mRNA"/>
</dbReference>
<dbReference type="EMBL" id="BC096302">
    <property type="protein sequence ID" value="AAH96302.1"/>
    <property type="molecule type" value="mRNA"/>
</dbReference>
<dbReference type="EMBL" id="BC096303">
    <property type="protein sequence ID" value="AAH96303.1"/>
    <property type="molecule type" value="mRNA"/>
</dbReference>
<dbReference type="EMBL" id="L07599">
    <property type="protein sequence ID" value="AAC82495.1"/>
    <property type="molecule type" value="mRNA"/>
</dbReference>
<dbReference type="EMBL" id="AB102662">
    <property type="protein sequence ID" value="BAC81131.1"/>
    <property type="molecule type" value="mRNA"/>
</dbReference>
<dbReference type="CCDS" id="CCDS14197.1"/>
<dbReference type="PIR" id="I38556">
    <property type="entry name" value="I38556"/>
</dbReference>
<dbReference type="RefSeq" id="NP_004577.1">
    <property type="nucleotide sequence ID" value="NM_004586.3"/>
</dbReference>
<dbReference type="PDB" id="4D9T">
    <property type="method" value="X-ray"/>
    <property type="resolution" value="2.40 A"/>
    <property type="chains" value="A=399-740"/>
</dbReference>
<dbReference type="PDB" id="4D9U">
    <property type="method" value="X-ray"/>
    <property type="resolution" value="2.40 A"/>
    <property type="chains" value="A=399-740"/>
</dbReference>
<dbReference type="PDB" id="4JG6">
    <property type="method" value="X-ray"/>
    <property type="resolution" value="2.60 A"/>
    <property type="chains" value="A=399-740"/>
</dbReference>
<dbReference type="PDB" id="4JG7">
    <property type="method" value="X-ray"/>
    <property type="resolution" value="3.00 A"/>
    <property type="chains" value="A=399-740"/>
</dbReference>
<dbReference type="PDB" id="4JG8">
    <property type="method" value="X-ray"/>
    <property type="resolution" value="3.10 A"/>
    <property type="chains" value="A=399-740"/>
</dbReference>
<dbReference type="PDB" id="4NUS">
    <property type="method" value="X-ray"/>
    <property type="resolution" value="2.39 A"/>
    <property type="chains" value="A=39-359"/>
</dbReference>
<dbReference type="PDB" id="4NW5">
    <property type="method" value="X-ray"/>
    <property type="resolution" value="1.94 A"/>
    <property type="chains" value="A=39-359"/>
</dbReference>
<dbReference type="PDB" id="4NW6">
    <property type="method" value="X-ray"/>
    <property type="resolution" value="1.74 A"/>
    <property type="chains" value="A=39-359"/>
</dbReference>
<dbReference type="PDB" id="5D9K">
    <property type="method" value="X-ray"/>
    <property type="resolution" value="2.55 A"/>
    <property type="chains" value="A/B=39-366"/>
</dbReference>
<dbReference type="PDB" id="5D9L">
    <property type="method" value="X-ray"/>
    <property type="resolution" value="2.15 A"/>
    <property type="chains" value="A=39-359"/>
</dbReference>
<dbReference type="PDB" id="7OPO">
    <property type="method" value="X-ray"/>
    <property type="resolution" value="2.75 A"/>
    <property type="chains" value="A/C/E/G/I/K=39-351"/>
</dbReference>
<dbReference type="PDB" id="8EQ5">
    <property type="method" value="X-ray"/>
    <property type="resolution" value="1.80 A"/>
    <property type="chains" value="A=46-346"/>
</dbReference>
<dbReference type="PDB" id="8R58">
    <property type="method" value="X-ray"/>
    <property type="resolution" value="2.31 A"/>
    <property type="chains" value="A=39-351"/>
</dbReference>
<dbReference type="PDB" id="8XEY">
    <property type="method" value="X-ray"/>
    <property type="resolution" value="2.65 A"/>
    <property type="chains" value="A=400-740"/>
</dbReference>
<dbReference type="PDB" id="8XFY">
    <property type="method" value="X-ray"/>
    <property type="resolution" value="3.20 A"/>
    <property type="chains" value="A/B/C/D/E/F/G/H/I/J=40-359"/>
</dbReference>
<dbReference type="PDBsum" id="4D9T"/>
<dbReference type="PDBsum" id="4D9U"/>
<dbReference type="PDBsum" id="4JG6"/>
<dbReference type="PDBsum" id="4JG7"/>
<dbReference type="PDBsum" id="4JG8"/>
<dbReference type="PDBsum" id="4NUS"/>
<dbReference type="PDBsum" id="4NW5"/>
<dbReference type="PDBsum" id="4NW6"/>
<dbReference type="PDBsum" id="5D9K"/>
<dbReference type="PDBsum" id="5D9L"/>
<dbReference type="PDBsum" id="7OPO"/>
<dbReference type="PDBsum" id="8EQ5"/>
<dbReference type="PDBsum" id="8R58"/>
<dbReference type="PDBsum" id="8XEY"/>
<dbReference type="PDBsum" id="8XFY"/>
<dbReference type="SMR" id="P51812"/>
<dbReference type="BioGRID" id="112111">
    <property type="interactions" value="213"/>
</dbReference>
<dbReference type="DIP" id="DIP-38247N"/>
<dbReference type="FunCoup" id="P51812">
    <property type="interactions" value="2985"/>
</dbReference>
<dbReference type="IntAct" id="P51812">
    <property type="interactions" value="111"/>
</dbReference>
<dbReference type="MINT" id="P51812"/>
<dbReference type="STRING" id="9606.ENSP00000368884"/>
<dbReference type="BindingDB" id="P51812"/>
<dbReference type="ChEMBL" id="CHEMBL2345"/>
<dbReference type="DrugBank" id="DB00945">
    <property type="generic name" value="Acetylsalicylic acid"/>
</dbReference>
<dbReference type="DrugBank" id="DB12010">
    <property type="generic name" value="Fostamatinib"/>
</dbReference>
<dbReference type="DrugCentral" id="P51812"/>
<dbReference type="GuidetoPHARMACOLOGY" id="1528"/>
<dbReference type="GlyCosmos" id="P51812">
    <property type="glycosylation" value="1 site, 1 glycan"/>
</dbReference>
<dbReference type="GlyGen" id="P51812">
    <property type="glycosylation" value="4 sites, 1 O-linked glycan (4 sites)"/>
</dbReference>
<dbReference type="iPTMnet" id="P51812"/>
<dbReference type="MetOSite" id="P51812"/>
<dbReference type="PhosphoSitePlus" id="P51812"/>
<dbReference type="BioMuta" id="RPS6KA3"/>
<dbReference type="DMDM" id="1730070"/>
<dbReference type="CPTAC" id="CPTAC-2899"/>
<dbReference type="CPTAC" id="CPTAC-2900"/>
<dbReference type="jPOST" id="P51812"/>
<dbReference type="MassIVE" id="P51812"/>
<dbReference type="PaxDb" id="9606-ENSP00000368884"/>
<dbReference type="PeptideAtlas" id="P51812"/>
<dbReference type="ProteomicsDB" id="56408"/>
<dbReference type="Pumba" id="P51812"/>
<dbReference type="Antibodypedia" id="1004">
    <property type="antibodies" value="597 antibodies from 39 providers"/>
</dbReference>
<dbReference type="DNASU" id="6197"/>
<dbReference type="Ensembl" id="ENST00000379565.9">
    <property type="protein sequence ID" value="ENSP00000368884.3"/>
    <property type="gene ID" value="ENSG00000177189.14"/>
</dbReference>
<dbReference type="GeneID" id="6197"/>
<dbReference type="KEGG" id="hsa:6197"/>
<dbReference type="MANE-Select" id="ENST00000379565.9">
    <property type="protein sequence ID" value="ENSP00000368884.3"/>
    <property type="RefSeq nucleotide sequence ID" value="NM_004586.3"/>
    <property type="RefSeq protein sequence ID" value="NP_004577.1"/>
</dbReference>
<dbReference type="UCSC" id="uc004czu.4">
    <property type="organism name" value="human"/>
</dbReference>
<dbReference type="AGR" id="HGNC:10432"/>
<dbReference type="CTD" id="6197"/>
<dbReference type="DisGeNET" id="6197"/>
<dbReference type="GeneCards" id="RPS6KA3"/>
<dbReference type="GeneReviews" id="RPS6KA3"/>
<dbReference type="HGNC" id="HGNC:10432">
    <property type="gene designation" value="RPS6KA3"/>
</dbReference>
<dbReference type="HPA" id="ENSG00000177189">
    <property type="expression patterns" value="Low tissue specificity"/>
</dbReference>
<dbReference type="MalaCards" id="RPS6KA3"/>
<dbReference type="MIM" id="300075">
    <property type="type" value="gene"/>
</dbReference>
<dbReference type="MIM" id="300844">
    <property type="type" value="phenotype"/>
</dbReference>
<dbReference type="MIM" id="303600">
    <property type="type" value="phenotype"/>
</dbReference>
<dbReference type="neXtProt" id="NX_P51812"/>
<dbReference type="OpenTargets" id="ENSG00000177189"/>
<dbReference type="Orphanet" id="192">
    <property type="disease" value="Coffin-Lowry syndrome"/>
</dbReference>
<dbReference type="Orphanet" id="276630">
    <property type="disease" value="Symptomatic form of Coffin-Lowry syndrome in female carriers"/>
</dbReference>
<dbReference type="Orphanet" id="777">
    <property type="disease" value="X-linked non-syndromic intellectual disability"/>
</dbReference>
<dbReference type="PharmGKB" id="PA34847"/>
<dbReference type="VEuPathDB" id="HostDB:ENSG00000177189"/>
<dbReference type="eggNOG" id="KOG0603">
    <property type="taxonomic scope" value="Eukaryota"/>
</dbReference>
<dbReference type="GeneTree" id="ENSGT00940000159370"/>
<dbReference type="HOGENOM" id="CLU_000288_58_3_1"/>
<dbReference type="InParanoid" id="P51812"/>
<dbReference type="OMA" id="QTDEVFY"/>
<dbReference type="OrthoDB" id="63267at2759"/>
<dbReference type="PAN-GO" id="P51812">
    <property type="GO annotations" value="4 GO annotations based on evolutionary models"/>
</dbReference>
<dbReference type="PhylomeDB" id="P51812"/>
<dbReference type="TreeFam" id="TF313438"/>
<dbReference type="BRENDA" id="2.7.11.1">
    <property type="organism ID" value="2681"/>
</dbReference>
<dbReference type="PathwayCommons" id="P51812"/>
<dbReference type="Reactome" id="R-HSA-198753">
    <property type="pathway name" value="ERK/MAPK targets"/>
</dbReference>
<dbReference type="Reactome" id="R-HSA-199920">
    <property type="pathway name" value="CREB phosphorylation"/>
</dbReference>
<dbReference type="Reactome" id="R-HSA-2559582">
    <property type="pathway name" value="Senescence-Associated Secretory Phenotype (SASP)"/>
</dbReference>
<dbReference type="Reactome" id="R-HSA-437239">
    <property type="pathway name" value="Recycling pathway of L1"/>
</dbReference>
<dbReference type="Reactome" id="R-HSA-442742">
    <property type="pathway name" value="CREB1 phosphorylation through NMDA receptor-mediated activation of RAS signaling"/>
</dbReference>
<dbReference type="Reactome" id="R-HSA-444257">
    <property type="pathway name" value="RSK activation"/>
</dbReference>
<dbReference type="Reactome" id="R-HSA-881907">
    <property type="pathway name" value="Gastrin-CREB signalling pathway via PKC and MAPK"/>
</dbReference>
<dbReference type="SABIO-RK" id="P51812"/>
<dbReference type="SignaLink" id="P51812"/>
<dbReference type="SIGNOR" id="P51812"/>
<dbReference type="BioGRID-ORCS" id="6197">
    <property type="hits" value="25 hits in 814 CRISPR screens"/>
</dbReference>
<dbReference type="CD-CODE" id="DEE660B4">
    <property type="entry name" value="Stress granule"/>
</dbReference>
<dbReference type="ChiTaRS" id="RPS6KA3">
    <property type="organism name" value="human"/>
</dbReference>
<dbReference type="EvolutionaryTrace" id="P51812"/>
<dbReference type="GeneWiki" id="RPS6KA3"/>
<dbReference type="GenomeRNAi" id="6197"/>
<dbReference type="Pharos" id="P51812">
    <property type="development level" value="Tchem"/>
</dbReference>
<dbReference type="PRO" id="PR:P51812"/>
<dbReference type="Proteomes" id="UP000005640">
    <property type="component" value="Chromosome X"/>
</dbReference>
<dbReference type="RNAct" id="P51812">
    <property type="molecule type" value="protein"/>
</dbReference>
<dbReference type="Bgee" id="ENSG00000177189">
    <property type="expression patterns" value="Expressed in cartilage tissue and 204 other cell types or tissues"/>
</dbReference>
<dbReference type="ExpressionAtlas" id="P51812">
    <property type="expression patterns" value="baseline and differential"/>
</dbReference>
<dbReference type="GO" id="GO:0005737">
    <property type="term" value="C:cytoplasm"/>
    <property type="evidence" value="ECO:0000318"/>
    <property type="project" value="GO_Central"/>
</dbReference>
<dbReference type="GO" id="GO:0005829">
    <property type="term" value="C:cytosol"/>
    <property type="evidence" value="ECO:0000314"/>
    <property type="project" value="HPA"/>
</dbReference>
<dbReference type="GO" id="GO:0005730">
    <property type="term" value="C:nucleolus"/>
    <property type="evidence" value="ECO:0000314"/>
    <property type="project" value="HPA"/>
</dbReference>
<dbReference type="GO" id="GO:0005654">
    <property type="term" value="C:nucleoplasm"/>
    <property type="evidence" value="ECO:0000314"/>
    <property type="project" value="HPA"/>
</dbReference>
<dbReference type="GO" id="GO:0045202">
    <property type="term" value="C:synapse"/>
    <property type="evidence" value="ECO:0007669"/>
    <property type="project" value="GOC"/>
</dbReference>
<dbReference type="GO" id="GO:0005524">
    <property type="term" value="F:ATP binding"/>
    <property type="evidence" value="ECO:0007669"/>
    <property type="project" value="UniProtKB-KW"/>
</dbReference>
<dbReference type="GO" id="GO:0000287">
    <property type="term" value="F:magnesium ion binding"/>
    <property type="evidence" value="ECO:0007669"/>
    <property type="project" value="InterPro"/>
</dbReference>
<dbReference type="GO" id="GO:0004672">
    <property type="term" value="F:protein kinase activity"/>
    <property type="evidence" value="ECO:0000304"/>
    <property type="project" value="ProtInc"/>
</dbReference>
<dbReference type="GO" id="GO:0019901">
    <property type="term" value="F:protein kinase binding"/>
    <property type="evidence" value="ECO:0007669"/>
    <property type="project" value="Ensembl"/>
</dbReference>
<dbReference type="GO" id="GO:0106310">
    <property type="term" value="F:protein serine kinase activity"/>
    <property type="evidence" value="ECO:0007669"/>
    <property type="project" value="RHEA"/>
</dbReference>
<dbReference type="GO" id="GO:0004674">
    <property type="term" value="F:protein serine/threonine kinase activity"/>
    <property type="evidence" value="ECO:0000304"/>
    <property type="project" value="Reactome"/>
</dbReference>
<dbReference type="GO" id="GO:0004711">
    <property type="term" value="F:ribosomal protein S6 kinase activity"/>
    <property type="evidence" value="ECO:0000318"/>
    <property type="project" value="GO_Central"/>
</dbReference>
<dbReference type="GO" id="GO:0007417">
    <property type="term" value="P:central nervous system development"/>
    <property type="evidence" value="ECO:0000304"/>
    <property type="project" value="ProtInc"/>
</dbReference>
<dbReference type="GO" id="GO:0007268">
    <property type="term" value="P:chemical synaptic transmission"/>
    <property type="evidence" value="ECO:0000304"/>
    <property type="project" value="Reactome"/>
</dbReference>
<dbReference type="GO" id="GO:0043066">
    <property type="term" value="P:negative regulation of apoptotic process"/>
    <property type="evidence" value="ECO:0000314"/>
    <property type="project" value="UniProtKB"/>
</dbReference>
<dbReference type="GO" id="GO:0045597">
    <property type="term" value="P:positive regulation of cell differentiation"/>
    <property type="evidence" value="ECO:0000304"/>
    <property type="project" value="UniProtKB"/>
</dbReference>
<dbReference type="GO" id="GO:0030307">
    <property type="term" value="P:positive regulation of cell growth"/>
    <property type="evidence" value="ECO:0000304"/>
    <property type="project" value="UniProtKB"/>
</dbReference>
<dbReference type="GO" id="GO:0045944">
    <property type="term" value="P:positive regulation of transcription by RNA polymerase II"/>
    <property type="evidence" value="ECO:0000315"/>
    <property type="project" value="BHF-UCL"/>
</dbReference>
<dbReference type="GO" id="GO:0043555">
    <property type="term" value="P:regulation of translation in response to stress"/>
    <property type="evidence" value="ECO:0000304"/>
    <property type="project" value="UniProtKB"/>
</dbReference>
<dbReference type="GO" id="GO:0032496">
    <property type="term" value="P:response to lipopolysaccharide"/>
    <property type="evidence" value="ECO:0000250"/>
    <property type="project" value="UniProtKB"/>
</dbReference>
<dbReference type="GO" id="GO:0007165">
    <property type="term" value="P:signal transduction"/>
    <property type="evidence" value="ECO:0000304"/>
    <property type="project" value="ProtInc"/>
</dbReference>
<dbReference type="GO" id="GO:0001501">
    <property type="term" value="P:skeletal system development"/>
    <property type="evidence" value="ECO:0000304"/>
    <property type="project" value="ProtInc"/>
</dbReference>
<dbReference type="GO" id="GO:0002224">
    <property type="term" value="P:toll-like receptor signaling pathway"/>
    <property type="evidence" value="ECO:0000250"/>
    <property type="project" value="UniProtKB"/>
</dbReference>
<dbReference type="GO" id="GO:0038202">
    <property type="term" value="P:TORC1 signaling"/>
    <property type="evidence" value="ECO:0000318"/>
    <property type="project" value="GO_Central"/>
</dbReference>
<dbReference type="CDD" id="cd14176">
    <property type="entry name" value="STKc_RSK2_C"/>
    <property type="match status" value="1"/>
</dbReference>
<dbReference type="CDD" id="cd05582">
    <property type="entry name" value="STKc_RSK_N"/>
    <property type="match status" value="1"/>
</dbReference>
<dbReference type="FunFam" id="1.10.510.10:FF:000010">
    <property type="entry name" value="Ribosomal protein S6 kinase"/>
    <property type="match status" value="1"/>
</dbReference>
<dbReference type="FunFam" id="1.10.510.10:FF:000041">
    <property type="entry name" value="Ribosomal protein S6 kinase"/>
    <property type="match status" value="1"/>
</dbReference>
<dbReference type="FunFam" id="3.30.200.20:FF:000013">
    <property type="entry name" value="Ribosomal protein S6 kinase"/>
    <property type="match status" value="1"/>
</dbReference>
<dbReference type="FunFam" id="3.30.200.20:FF:000121">
    <property type="entry name" value="Ribosomal protein S6 kinase"/>
    <property type="match status" value="1"/>
</dbReference>
<dbReference type="Gene3D" id="3.30.200.20">
    <property type="entry name" value="Phosphorylase Kinase, domain 1"/>
    <property type="match status" value="2"/>
</dbReference>
<dbReference type="Gene3D" id="1.10.510.10">
    <property type="entry name" value="Transferase(Phosphotransferase) domain 1"/>
    <property type="match status" value="2"/>
</dbReference>
<dbReference type="InterPro" id="IPR000961">
    <property type="entry name" value="AGC-kinase_C"/>
</dbReference>
<dbReference type="InterPro" id="IPR011009">
    <property type="entry name" value="Kinase-like_dom_sf"/>
</dbReference>
<dbReference type="InterPro" id="IPR017892">
    <property type="entry name" value="Pkinase_C"/>
</dbReference>
<dbReference type="InterPro" id="IPR000719">
    <property type="entry name" value="Prot_kinase_dom"/>
</dbReference>
<dbReference type="InterPro" id="IPR017441">
    <property type="entry name" value="Protein_kinase_ATP_BS"/>
</dbReference>
<dbReference type="InterPro" id="IPR016239">
    <property type="entry name" value="Ribosomal_S6_kinase_II"/>
</dbReference>
<dbReference type="InterPro" id="IPR041905">
    <property type="entry name" value="RPS6KA3_C"/>
</dbReference>
<dbReference type="InterPro" id="IPR041906">
    <property type="entry name" value="RSK_N"/>
</dbReference>
<dbReference type="InterPro" id="IPR008271">
    <property type="entry name" value="Ser/Thr_kinase_AS"/>
</dbReference>
<dbReference type="PANTHER" id="PTHR24351">
    <property type="entry name" value="RIBOSOMAL PROTEIN S6 KINASE"/>
    <property type="match status" value="1"/>
</dbReference>
<dbReference type="Pfam" id="PF00069">
    <property type="entry name" value="Pkinase"/>
    <property type="match status" value="2"/>
</dbReference>
<dbReference type="Pfam" id="PF00433">
    <property type="entry name" value="Pkinase_C"/>
    <property type="match status" value="1"/>
</dbReference>
<dbReference type="PIRSF" id="PIRSF000606">
    <property type="entry name" value="Ribsml_S6_kin_2"/>
    <property type="match status" value="1"/>
</dbReference>
<dbReference type="SMART" id="SM00133">
    <property type="entry name" value="S_TK_X"/>
    <property type="match status" value="1"/>
</dbReference>
<dbReference type="SMART" id="SM00220">
    <property type="entry name" value="S_TKc"/>
    <property type="match status" value="2"/>
</dbReference>
<dbReference type="SUPFAM" id="SSF56112">
    <property type="entry name" value="Protein kinase-like (PK-like)"/>
    <property type="match status" value="2"/>
</dbReference>
<dbReference type="PROSITE" id="PS51285">
    <property type="entry name" value="AGC_KINASE_CTER"/>
    <property type="match status" value="1"/>
</dbReference>
<dbReference type="PROSITE" id="PS00107">
    <property type="entry name" value="PROTEIN_KINASE_ATP"/>
    <property type="match status" value="2"/>
</dbReference>
<dbReference type="PROSITE" id="PS50011">
    <property type="entry name" value="PROTEIN_KINASE_DOM"/>
    <property type="match status" value="2"/>
</dbReference>
<dbReference type="PROSITE" id="PS00108">
    <property type="entry name" value="PROTEIN_KINASE_ST"/>
    <property type="match status" value="2"/>
</dbReference>
<accession>P51812</accession>
<accession>B2R9V4</accession>
<accession>Q4VAP3</accession>
<accession>Q59H26</accession>
<accession>Q5JPK8</accession>
<accession>Q7Z3Z7</accession>
<sequence>MPLAQLADPWQKMAVESPSDSAENGQQIMDEPMGEEEINPQTEEVSIKEIAITHHVKEGHEKADPSQFELLKVLGQGSFGKVFLVKKISGSDARQLYAMKVLKKATLKVRDRVRTKMERDILVEVNHPFIVKLHYAFQTEGKLYLILDFLRGGDLFTRLSKEVMFTEEDVKFYLAELALALDHLHSLGIIYRDLKPENILLDEEGHIKLTDFGLSKESIDHEKKAYSFCGTVEYMAPEVVNRRGHTQSADWWSFGVLMFEMLTGTLPFQGKDRKETMTMILKAKLGMPQFLSPEAQSLLRMLFKRNPANRLGAGPDGVEEIKRHSFFSTIDWNKLYRREIHPPFKPATGRPEDTFYFDPEFTAKTPKDSPGIPPSANAHQLFRGFSFVAITSDDESQAMQTVGVHSIVQQLHRNSIQFTDGYEVKEDIGVGSYSVCKRCIHKATNMEFAVKIIDKSKRDPTEEIEILLRYGQHPNIITLKDVYDDGKYVYVVTELMKGGELLDKILRQKFFSEREASAVLFTITKTVEYLHAQGVVHRDLKPSNILYVDESGNPESIRICDFGFAKQLRAENGLLMTPCYTANFVAPEVLKRQGYDAACDIWSLGVLLYTMLTGYTPFANGPDDTPEEILARIGSGKFSLSGGYWNSVSDTAKDLVSKMLHVDPHQRLTAALVLRHPWIVHWDQLPQYQLNRQDAPHLVKGAMAATYSALNRNQSPVLEPVGRSTLAQRRGIKKITSTAL</sequence>
<reference key="1">
    <citation type="journal article" date="1995" name="Diabetes">
        <title>Cloning of a human insulin-stimulated protein kinase (ISPK-1) gene and analysis of coding regions and mRNA levels of the ISPK-1 and the protein phosphatase-1 genes in muscle from NIDDM patients.</title>
        <authorList>
            <person name="Bjoerbaek C."/>
            <person name="Vik T.A."/>
            <person name="Echwald S.M."/>
            <person name="Webb G.C."/>
            <person name="Wang J.P."/>
            <person name="Yang P.-Y."/>
            <person name="Vestergaard H."/>
            <person name="Richmond K."/>
            <person name="Hansen T."/>
            <person name="Erikson R.L."/>
            <person name="Miklos G.L.G."/>
            <person name="Cohen P.T.W."/>
            <person name="Pedersen O."/>
        </authorList>
    </citation>
    <scope>NUCLEOTIDE SEQUENCE [MRNA]</scope>
    <source>
        <tissue>Placenta</tissue>
        <tissue>T-cell</tissue>
    </source>
</reference>
<reference key="2">
    <citation type="journal article" date="2004" name="Nat. Genet.">
        <title>Complete sequencing and characterization of 21,243 full-length human cDNAs.</title>
        <authorList>
            <person name="Ota T."/>
            <person name="Suzuki Y."/>
            <person name="Nishikawa T."/>
            <person name="Otsuki T."/>
            <person name="Sugiyama T."/>
            <person name="Irie R."/>
            <person name="Wakamatsu A."/>
            <person name="Hayashi K."/>
            <person name="Sato H."/>
            <person name="Nagai K."/>
            <person name="Kimura K."/>
            <person name="Makita H."/>
            <person name="Sekine M."/>
            <person name="Obayashi M."/>
            <person name="Nishi T."/>
            <person name="Shibahara T."/>
            <person name="Tanaka T."/>
            <person name="Ishii S."/>
            <person name="Yamamoto J."/>
            <person name="Saito K."/>
            <person name="Kawai Y."/>
            <person name="Isono Y."/>
            <person name="Nakamura Y."/>
            <person name="Nagahari K."/>
            <person name="Murakami K."/>
            <person name="Yasuda T."/>
            <person name="Iwayanagi T."/>
            <person name="Wagatsuma M."/>
            <person name="Shiratori A."/>
            <person name="Sudo H."/>
            <person name="Hosoiri T."/>
            <person name="Kaku Y."/>
            <person name="Kodaira H."/>
            <person name="Kondo H."/>
            <person name="Sugawara M."/>
            <person name="Takahashi M."/>
            <person name="Kanda K."/>
            <person name="Yokoi T."/>
            <person name="Furuya T."/>
            <person name="Kikkawa E."/>
            <person name="Omura Y."/>
            <person name="Abe K."/>
            <person name="Kamihara K."/>
            <person name="Katsuta N."/>
            <person name="Sato K."/>
            <person name="Tanikawa M."/>
            <person name="Yamazaki M."/>
            <person name="Ninomiya K."/>
            <person name="Ishibashi T."/>
            <person name="Yamashita H."/>
            <person name="Murakawa K."/>
            <person name="Fujimori K."/>
            <person name="Tanai H."/>
            <person name="Kimata M."/>
            <person name="Watanabe M."/>
            <person name="Hiraoka S."/>
            <person name="Chiba Y."/>
            <person name="Ishida S."/>
            <person name="Ono Y."/>
            <person name="Takiguchi S."/>
            <person name="Watanabe S."/>
            <person name="Yosida M."/>
            <person name="Hotuta T."/>
            <person name="Kusano J."/>
            <person name="Kanehori K."/>
            <person name="Takahashi-Fujii A."/>
            <person name="Hara H."/>
            <person name="Tanase T.-O."/>
            <person name="Nomura Y."/>
            <person name="Togiya S."/>
            <person name="Komai F."/>
            <person name="Hara R."/>
            <person name="Takeuchi K."/>
            <person name="Arita M."/>
            <person name="Imose N."/>
            <person name="Musashino K."/>
            <person name="Yuuki H."/>
            <person name="Oshima A."/>
            <person name="Sasaki N."/>
            <person name="Aotsuka S."/>
            <person name="Yoshikawa Y."/>
            <person name="Matsunawa H."/>
            <person name="Ichihara T."/>
            <person name="Shiohata N."/>
            <person name="Sano S."/>
            <person name="Moriya S."/>
            <person name="Momiyama H."/>
            <person name="Satoh N."/>
            <person name="Takami S."/>
            <person name="Terashima Y."/>
            <person name="Suzuki O."/>
            <person name="Nakagawa S."/>
            <person name="Senoh A."/>
            <person name="Mizoguchi H."/>
            <person name="Goto Y."/>
            <person name="Shimizu F."/>
            <person name="Wakebe H."/>
            <person name="Hishigaki H."/>
            <person name="Watanabe T."/>
            <person name="Sugiyama A."/>
            <person name="Takemoto M."/>
            <person name="Kawakami B."/>
            <person name="Yamazaki M."/>
            <person name="Watanabe K."/>
            <person name="Kumagai A."/>
            <person name="Itakura S."/>
            <person name="Fukuzumi Y."/>
            <person name="Fujimori Y."/>
            <person name="Komiyama M."/>
            <person name="Tashiro H."/>
            <person name="Tanigami A."/>
            <person name="Fujiwara T."/>
            <person name="Ono T."/>
            <person name="Yamada K."/>
            <person name="Fujii Y."/>
            <person name="Ozaki K."/>
            <person name="Hirao M."/>
            <person name="Ohmori Y."/>
            <person name="Kawabata A."/>
            <person name="Hikiji T."/>
            <person name="Kobatake N."/>
            <person name="Inagaki H."/>
            <person name="Ikema Y."/>
            <person name="Okamoto S."/>
            <person name="Okitani R."/>
            <person name="Kawakami T."/>
            <person name="Noguchi S."/>
            <person name="Itoh T."/>
            <person name="Shigeta K."/>
            <person name="Senba T."/>
            <person name="Matsumura K."/>
            <person name="Nakajima Y."/>
            <person name="Mizuno T."/>
            <person name="Morinaga M."/>
            <person name="Sasaki M."/>
            <person name="Togashi T."/>
            <person name="Oyama M."/>
            <person name="Hata H."/>
            <person name="Watanabe M."/>
            <person name="Komatsu T."/>
            <person name="Mizushima-Sugano J."/>
            <person name="Satoh T."/>
            <person name="Shirai Y."/>
            <person name="Takahashi Y."/>
            <person name="Nakagawa K."/>
            <person name="Okumura K."/>
            <person name="Nagase T."/>
            <person name="Nomura N."/>
            <person name="Kikuchi H."/>
            <person name="Masuho Y."/>
            <person name="Yamashita R."/>
            <person name="Nakai K."/>
            <person name="Yada T."/>
            <person name="Nakamura Y."/>
            <person name="Ohara O."/>
            <person name="Isogai T."/>
            <person name="Sugano S."/>
        </authorList>
    </citation>
    <scope>NUCLEOTIDE SEQUENCE [LARGE SCALE MRNA]</scope>
</reference>
<reference key="3">
    <citation type="submission" date="2005-03" db="EMBL/GenBank/DDBJ databases">
        <authorList>
            <person name="Totoki Y."/>
            <person name="Toyoda A."/>
            <person name="Takeda T."/>
            <person name="Sakaki Y."/>
            <person name="Tanaka A."/>
            <person name="Yokoyama S."/>
            <person name="Ohara O."/>
            <person name="Nagase T."/>
            <person name="Kikuno R.F."/>
        </authorList>
    </citation>
    <scope>NUCLEOTIDE SEQUENCE [LARGE SCALE MRNA]</scope>
    <source>
        <tissue>Brain</tissue>
    </source>
</reference>
<reference key="4">
    <citation type="journal article" date="2005" name="Nature">
        <title>The DNA sequence of the human X chromosome.</title>
        <authorList>
            <person name="Ross M.T."/>
            <person name="Grafham D.V."/>
            <person name="Coffey A.J."/>
            <person name="Scherer S."/>
            <person name="McLay K."/>
            <person name="Muzny D."/>
            <person name="Platzer M."/>
            <person name="Howell G.R."/>
            <person name="Burrows C."/>
            <person name="Bird C.P."/>
            <person name="Frankish A."/>
            <person name="Lovell F.L."/>
            <person name="Howe K.L."/>
            <person name="Ashurst J.L."/>
            <person name="Fulton R.S."/>
            <person name="Sudbrak R."/>
            <person name="Wen G."/>
            <person name="Jones M.C."/>
            <person name="Hurles M.E."/>
            <person name="Andrews T.D."/>
            <person name="Scott C.E."/>
            <person name="Searle S."/>
            <person name="Ramser J."/>
            <person name="Whittaker A."/>
            <person name="Deadman R."/>
            <person name="Carter N.P."/>
            <person name="Hunt S.E."/>
            <person name="Chen R."/>
            <person name="Cree A."/>
            <person name="Gunaratne P."/>
            <person name="Havlak P."/>
            <person name="Hodgson A."/>
            <person name="Metzker M.L."/>
            <person name="Richards S."/>
            <person name="Scott G."/>
            <person name="Steffen D."/>
            <person name="Sodergren E."/>
            <person name="Wheeler D.A."/>
            <person name="Worley K.C."/>
            <person name="Ainscough R."/>
            <person name="Ambrose K.D."/>
            <person name="Ansari-Lari M.A."/>
            <person name="Aradhya S."/>
            <person name="Ashwell R.I."/>
            <person name="Babbage A.K."/>
            <person name="Bagguley C.L."/>
            <person name="Ballabio A."/>
            <person name="Banerjee R."/>
            <person name="Barker G.E."/>
            <person name="Barlow K.F."/>
            <person name="Barrett I.P."/>
            <person name="Bates K.N."/>
            <person name="Beare D.M."/>
            <person name="Beasley H."/>
            <person name="Beasley O."/>
            <person name="Beck A."/>
            <person name="Bethel G."/>
            <person name="Blechschmidt K."/>
            <person name="Brady N."/>
            <person name="Bray-Allen S."/>
            <person name="Bridgeman A.M."/>
            <person name="Brown A.J."/>
            <person name="Brown M.J."/>
            <person name="Bonnin D."/>
            <person name="Bruford E.A."/>
            <person name="Buhay C."/>
            <person name="Burch P."/>
            <person name="Burford D."/>
            <person name="Burgess J."/>
            <person name="Burrill W."/>
            <person name="Burton J."/>
            <person name="Bye J.M."/>
            <person name="Carder C."/>
            <person name="Carrel L."/>
            <person name="Chako J."/>
            <person name="Chapman J.C."/>
            <person name="Chavez D."/>
            <person name="Chen E."/>
            <person name="Chen G."/>
            <person name="Chen Y."/>
            <person name="Chen Z."/>
            <person name="Chinault C."/>
            <person name="Ciccodicola A."/>
            <person name="Clark S.Y."/>
            <person name="Clarke G."/>
            <person name="Clee C.M."/>
            <person name="Clegg S."/>
            <person name="Clerc-Blankenburg K."/>
            <person name="Clifford K."/>
            <person name="Cobley V."/>
            <person name="Cole C.G."/>
            <person name="Conquer J.S."/>
            <person name="Corby N."/>
            <person name="Connor R.E."/>
            <person name="David R."/>
            <person name="Davies J."/>
            <person name="Davis C."/>
            <person name="Davis J."/>
            <person name="Delgado O."/>
            <person name="Deshazo D."/>
            <person name="Dhami P."/>
            <person name="Ding Y."/>
            <person name="Dinh H."/>
            <person name="Dodsworth S."/>
            <person name="Draper H."/>
            <person name="Dugan-Rocha S."/>
            <person name="Dunham A."/>
            <person name="Dunn M."/>
            <person name="Durbin K.J."/>
            <person name="Dutta I."/>
            <person name="Eades T."/>
            <person name="Ellwood M."/>
            <person name="Emery-Cohen A."/>
            <person name="Errington H."/>
            <person name="Evans K.L."/>
            <person name="Faulkner L."/>
            <person name="Francis F."/>
            <person name="Frankland J."/>
            <person name="Fraser A.E."/>
            <person name="Galgoczy P."/>
            <person name="Gilbert J."/>
            <person name="Gill R."/>
            <person name="Gloeckner G."/>
            <person name="Gregory S.G."/>
            <person name="Gribble S."/>
            <person name="Griffiths C."/>
            <person name="Grocock R."/>
            <person name="Gu Y."/>
            <person name="Gwilliam R."/>
            <person name="Hamilton C."/>
            <person name="Hart E.A."/>
            <person name="Hawes A."/>
            <person name="Heath P.D."/>
            <person name="Heitmann K."/>
            <person name="Hennig S."/>
            <person name="Hernandez J."/>
            <person name="Hinzmann B."/>
            <person name="Ho S."/>
            <person name="Hoffs M."/>
            <person name="Howden P.J."/>
            <person name="Huckle E.J."/>
            <person name="Hume J."/>
            <person name="Hunt P.J."/>
            <person name="Hunt A.R."/>
            <person name="Isherwood J."/>
            <person name="Jacob L."/>
            <person name="Johnson D."/>
            <person name="Jones S."/>
            <person name="de Jong P.J."/>
            <person name="Joseph S.S."/>
            <person name="Keenan S."/>
            <person name="Kelly S."/>
            <person name="Kershaw J.K."/>
            <person name="Khan Z."/>
            <person name="Kioschis P."/>
            <person name="Klages S."/>
            <person name="Knights A.J."/>
            <person name="Kosiura A."/>
            <person name="Kovar-Smith C."/>
            <person name="Laird G.K."/>
            <person name="Langford C."/>
            <person name="Lawlor S."/>
            <person name="Leversha M."/>
            <person name="Lewis L."/>
            <person name="Liu W."/>
            <person name="Lloyd C."/>
            <person name="Lloyd D.M."/>
            <person name="Loulseged H."/>
            <person name="Loveland J.E."/>
            <person name="Lovell J.D."/>
            <person name="Lozado R."/>
            <person name="Lu J."/>
            <person name="Lyne R."/>
            <person name="Ma J."/>
            <person name="Maheshwari M."/>
            <person name="Matthews L.H."/>
            <person name="McDowall J."/>
            <person name="McLaren S."/>
            <person name="McMurray A."/>
            <person name="Meidl P."/>
            <person name="Meitinger T."/>
            <person name="Milne S."/>
            <person name="Miner G."/>
            <person name="Mistry S.L."/>
            <person name="Morgan M."/>
            <person name="Morris S."/>
            <person name="Mueller I."/>
            <person name="Mullikin J.C."/>
            <person name="Nguyen N."/>
            <person name="Nordsiek G."/>
            <person name="Nyakatura G."/>
            <person name="O'dell C.N."/>
            <person name="Okwuonu G."/>
            <person name="Palmer S."/>
            <person name="Pandian R."/>
            <person name="Parker D."/>
            <person name="Parrish J."/>
            <person name="Pasternak S."/>
            <person name="Patel D."/>
            <person name="Pearce A.V."/>
            <person name="Pearson D.M."/>
            <person name="Pelan S.E."/>
            <person name="Perez L."/>
            <person name="Porter K.M."/>
            <person name="Ramsey Y."/>
            <person name="Reichwald K."/>
            <person name="Rhodes S."/>
            <person name="Ridler K.A."/>
            <person name="Schlessinger D."/>
            <person name="Schueler M.G."/>
            <person name="Sehra H.K."/>
            <person name="Shaw-Smith C."/>
            <person name="Shen H."/>
            <person name="Sheridan E.M."/>
            <person name="Shownkeen R."/>
            <person name="Skuce C.D."/>
            <person name="Smith M.L."/>
            <person name="Sotheran E.C."/>
            <person name="Steingruber H.E."/>
            <person name="Steward C.A."/>
            <person name="Storey R."/>
            <person name="Swann R.M."/>
            <person name="Swarbreck D."/>
            <person name="Tabor P.E."/>
            <person name="Taudien S."/>
            <person name="Taylor T."/>
            <person name="Teague B."/>
            <person name="Thomas K."/>
            <person name="Thorpe A."/>
            <person name="Timms K."/>
            <person name="Tracey A."/>
            <person name="Trevanion S."/>
            <person name="Tromans A.C."/>
            <person name="d'Urso M."/>
            <person name="Verduzco D."/>
            <person name="Villasana D."/>
            <person name="Waldron L."/>
            <person name="Wall M."/>
            <person name="Wang Q."/>
            <person name="Warren J."/>
            <person name="Warry G.L."/>
            <person name="Wei X."/>
            <person name="West A."/>
            <person name="Whitehead S.L."/>
            <person name="Whiteley M.N."/>
            <person name="Wilkinson J.E."/>
            <person name="Willey D.L."/>
            <person name="Williams G."/>
            <person name="Williams L."/>
            <person name="Williamson A."/>
            <person name="Williamson H."/>
            <person name="Wilming L."/>
            <person name="Woodmansey R.L."/>
            <person name="Wray P.W."/>
            <person name="Yen J."/>
            <person name="Zhang J."/>
            <person name="Zhou J."/>
            <person name="Zoghbi H."/>
            <person name="Zorilla S."/>
            <person name="Buck D."/>
            <person name="Reinhardt R."/>
            <person name="Poustka A."/>
            <person name="Rosenthal A."/>
            <person name="Lehrach H."/>
            <person name="Meindl A."/>
            <person name="Minx P.J."/>
            <person name="Hillier L.W."/>
            <person name="Willard H.F."/>
            <person name="Wilson R.K."/>
            <person name="Waterston R.H."/>
            <person name="Rice C.M."/>
            <person name="Vaudin M."/>
            <person name="Coulson A."/>
            <person name="Nelson D.L."/>
            <person name="Weinstock G."/>
            <person name="Sulston J.E."/>
            <person name="Durbin R.M."/>
            <person name="Hubbard T."/>
            <person name="Gibbs R.A."/>
            <person name="Beck S."/>
            <person name="Rogers J."/>
            <person name="Bentley D.R."/>
        </authorList>
    </citation>
    <scope>NUCLEOTIDE SEQUENCE [LARGE SCALE GENOMIC DNA]</scope>
</reference>
<reference key="5">
    <citation type="journal article" date="2004" name="Genome Res.">
        <title>The status, quality, and expansion of the NIH full-length cDNA project: the Mammalian Gene Collection (MGC).</title>
        <authorList>
            <consortium name="The MGC Project Team"/>
        </authorList>
    </citation>
    <scope>NUCLEOTIDE SEQUENCE [LARGE SCALE MRNA]</scope>
</reference>
<reference key="6">
    <citation type="journal article" date="1994" name="Am. J. Physiol.">
        <title>Human rsk isoforms: cloning and characterization of tissue-specific expression.</title>
        <authorList>
            <person name="Moller D.E."/>
            <person name="Xia C.-H."/>
            <person name="Tang W."/>
            <person name="Zhu A.X."/>
            <person name="Jakubowski M."/>
        </authorList>
    </citation>
    <scope>NUCLEOTIDE SEQUENCE [MRNA] OF 2-582</scope>
    <source>
        <tissue>Skeletal muscle</tissue>
    </source>
</reference>
<reference key="7">
    <citation type="journal article" date="2003" name="Mol. Biol. Evol.">
        <title>Gene diversity patterns at 10 X-chromosomal loci in humans and chimpanzees.</title>
        <authorList>
            <person name="Kitano T."/>
            <person name="Schwarz C."/>
            <person name="Nickel B."/>
            <person name="Paeaebo S."/>
        </authorList>
    </citation>
    <scope>NUCLEOTIDE SEQUENCE [MRNA] OF 15-735</scope>
</reference>
<reference key="8">
    <citation type="journal article" date="1993" name="Biochem. J.">
        <title>Inactivation of glycogen synthase kinase-3 beta by phosphorylation: new kinase connections in insulin and growth-factor signalling.</title>
        <authorList>
            <person name="Sutherland C."/>
            <person name="Leighton I.A."/>
            <person name="Cohen P."/>
        </authorList>
    </citation>
    <scope>FUNCTION IN PHOSPHORYLATION OF GSK3B</scope>
</reference>
<reference key="9">
    <citation type="journal article" date="1998" name="Proc. Natl. Acad. Sci. U.S.A.">
        <title>Rsk-2 activity is necessary for epidermal growth factor-induced phosphorylation of CREB protein and transcription of c-fos gene.</title>
        <authorList>
            <person name="De Cesare D."/>
            <person name="Jacquot S."/>
            <person name="Hanauer A."/>
            <person name="Sassone-Corsi P."/>
        </authorList>
    </citation>
    <scope>FUNCTION IN PHOSPHORYLATION OF CREB1</scope>
</reference>
<reference key="10">
    <citation type="journal article" date="1999" name="Science">
        <title>Requirement of Rsk-2 for epidermal growth factor-activated phosphorylation of histone H3.</title>
        <authorList>
            <person name="Sassone-Corsi P."/>
            <person name="Mizzen C.A."/>
            <person name="Cheung P."/>
            <person name="Crosio C."/>
            <person name="Monaco L."/>
            <person name="Jacquot S."/>
            <person name="Hanauer A."/>
            <person name="Allis C.D."/>
        </authorList>
    </citation>
    <scope>FUNCTION IN PHOSPHORYLATION OF HISTONE H3</scope>
</reference>
<reference key="11">
    <citation type="journal article" date="2005" name="Curr. Biol.">
        <title>The tumor suppressor DAP kinase is a target of RSK-mediated survival signaling.</title>
        <authorList>
            <person name="Anjum R."/>
            <person name="Roux P.P."/>
            <person name="Ballif B.A."/>
            <person name="Gygi S.P."/>
            <person name="Blenis J."/>
        </authorList>
    </citation>
    <scope>FUNCTION IN PHOSPHORYLATION OF DAPK1</scope>
</reference>
<reference key="12">
    <citation type="journal article" date="2006" name="Biochem. J.">
        <title>Nur77 is phosphorylated in cells by RSK in response to mitogenic stimulation.</title>
        <authorList>
            <person name="Wingate A.D."/>
            <person name="Campbell D.G."/>
            <person name="Peggie M."/>
            <person name="Arthur J.S."/>
        </authorList>
    </citation>
    <scope>FUNCTION IN PHOSPHORYLATION OF NR4A1/NUR77</scope>
</reference>
<reference key="13">
    <citation type="journal article" date="2006" name="Nat. Biotechnol.">
        <title>A probability-based approach for high-throughput protein phosphorylation analysis and site localization.</title>
        <authorList>
            <person name="Beausoleil S.A."/>
            <person name="Villen J."/>
            <person name="Gerber S.A."/>
            <person name="Rush J."/>
            <person name="Gygi S.P."/>
        </authorList>
    </citation>
    <scope>PHOSPHORYLATION [LARGE SCALE ANALYSIS] AT SER-715</scope>
    <scope>IDENTIFICATION BY MASS SPECTROMETRY [LARGE SCALE ANALYSIS]</scope>
    <source>
        <tissue>Cervix carcinoma</tissue>
    </source>
</reference>
<reference key="14">
    <citation type="journal article" date="2007" name="J. Biol. Chem.">
        <title>RSK2 mediates muscle cell differentiation through regulation of NFAT3.</title>
        <authorList>
            <person name="Cho Y.-Y."/>
            <person name="Yao K."/>
            <person name="Bode A.M."/>
            <person name="Bergen H.R. III"/>
            <person name="Madden B.J."/>
            <person name="Oh S.-M."/>
            <person name="Ermakova S."/>
            <person name="Kang B.S."/>
            <person name="Choi H.S."/>
            <person name="Shim J.-H."/>
            <person name="Dong Z."/>
        </authorList>
    </citation>
    <scope>CATALYTIC ACTIVITY</scope>
    <scope>BIOPHYSICOCHEMICAL PROPERTIES</scope>
    <scope>INTERACTION WITH NFATC4</scope>
    <scope>SUBCELLULAR LOCATION</scope>
</reference>
<reference key="15">
    <citation type="journal article" date="2007" name="J. Biol. Chem.">
        <title>RAS/ERK signaling promotes site-specific ribosomal protein S6 phosphorylation via RSK and stimulates cap-dependent translation.</title>
        <authorList>
            <person name="Roux P.P."/>
            <person name="Shahbazian D."/>
            <person name="Vu H."/>
            <person name="Holz M.K."/>
            <person name="Cohen M.S."/>
            <person name="Taunton J."/>
            <person name="Sonenberg N."/>
            <person name="Blenis J."/>
        </authorList>
    </citation>
    <scope>FUNCTION IN PHOSPHORYLATION OF RPS6</scope>
</reference>
<reference key="16">
    <citation type="journal article" date="2008" name="Curr. Biol.">
        <title>Oncogenic MAPK signaling stimulates mTORC1 activity by promoting RSK-mediated raptor phosphorylation.</title>
        <authorList>
            <person name="Carriere A."/>
            <person name="Cargnello M."/>
            <person name="Julien L.A."/>
            <person name="Gao H."/>
            <person name="Bonneil E."/>
            <person name="Thibault P."/>
            <person name="Roux P.P."/>
        </authorList>
    </citation>
    <scope>FUNCTION IN MTOR SIGNALING</scope>
</reference>
<reference key="17">
    <citation type="journal article" date="2008" name="Front. Biosci.">
        <title>The RSK factors of activating the Ras/MAPK signaling cascade.</title>
        <authorList>
            <person name="Carriere A."/>
            <person name="Ray H."/>
            <person name="Blenis J."/>
            <person name="Roux P.P."/>
        </authorList>
    </citation>
    <scope>REVIEW ON FUNCTION</scope>
    <scope>REVIEW ON ACTIVITY REGULATION</scope>
</reference>
<reference key="18">
    <citation type="journal article" date="2008" name="Mol. Cell">
        <title>Kinase-selective enrichment enables quantitative phosphoproteomics of the kinome across the cell cycle.</title>
        <authorList>
            <person name="Daub H."/>
            <person name="Olsen J.V."/>
            <person name="Bairlein M."/>
            <person name="Gnad F."/>
            <person name="Oppermann F.S."/>
            <person name="Korner R."/>
            <person name="Greff Z."/>
            <person name="Keri G."/>
            <person name="Stemmann O."/>
            <person name="Mann M."/>
        </authorList>
    </citation>
    <scope>PHOSPHORYLATION [LARGE SCALE ANALYSIS] AT THR-365; SER-369; SER-375; SER-386; SER-415; SER-556 AND SER-715</scope>
    <scope>IDENTIFICATION BY MASS SPECTROMETRY [LARGE SCALE ANALYSIS]</scope>
    <source>
        <tissue>Cervix carcinoma</tissue>
    </source>
</reference>
<reference key="19">
    <citation type="journal article" date="2008" name="Nat. Rev. Mol. Cell Biol.">
        <title>The RSK family of kinases: emerging roles in cellular signalling.</title>
        <authorList>
            <person name="Anjum R."/>
            <person name="Blenis J."/>
        </authorList>
    </citation>
    <scope>REVIEW ON FUNCTION</scope>
    <scope>REVIEW ON ACTIVITY REGULATION</scope>
</reference>
<reference key="20">
    <citation type="journal article" date="2008" name="Proc. Natl. Acad. Sci. U.S.A.">
        <title>A quantitative atlas of mitotic phosphorylation.</title>
        <authorList>
            <person name="Dephoure N."/>
            <person name="Zhou C."/>
            <person name="Villen J."/>
            <person name="Beausoleil S.A."/>
            <person name="Bakalarski C.E."/>
            <person name="Elledge S.J."/>
            <person name="Gygi S.P."/>
        </authorList>
    </citation>
    <scope>PHOSPHORYLATION [LARGE SCALE ANALYSIS] AT THR-365; SER-369 AND SER-375</scope>
    <scope>IDENTIFICATION BY MASS SPECTROMETRY [LARGE SCALE ANALYSIS]</scope>
    <source>
        <tissue>Cervix carcinoma</tissue>
    </source>
</reference>
<reference key="21">
    <citation type="journal article" date="2009" name="Mol. Cell. Proteomics">
        <title>Large-scale proteomics analysis of the human kinome.</title>
        <authorList>
            <person name="Oppermann F.S."/>
            <person name="Gnad F."/>
            <person name="Olsen J.V."/>
            <person name="Hornberger R."/>
            <person name="Greff Z."/>
            <person name="Keri G."/>
            <person name="Mann M."/>
            <person name="Daub H."/>
        </authorList>
    </citation>
    <scope>PHOSPHORYLATION [LARGE SCALE ANALYSIS] AT THR-365; SER-369; SER-375; SER-386; SER-415 AND SER-715</scope>
    <scope>IDENTIFICATION BY MASS SPECTROMETRY [LARGE SCALE ANALYSIS]</scope>
</reference>
<reference key="22">
    <citation type="journal article" date="2009" name="Sci. Signal.">
        <title>Quantitative phosphoproteomic analysis of T cell receptor signaling reveals system-wide modulation of protein-protein interactions.</title>
        <authorList>
            <person name="Mayya V."/>
            <person name="Lundgren D.H."/>
            <person name="Hwang S.-I."/>
            <person name="Rezaul K."/>
            <person name="Wu L."/>
            <person name="Eng J.K."/>
            <person name="Rodionov V."/>
            <person name="Han D.K."/>
        </authorList>
    </citation>
    <scope>PHOSPHORYLATION [LARGE SCALE ANALYSIS] AT SER-415</scope>
    <scope>IDENTIFICATION BY MASS SPECTROMETRY [LARGE SCALE ANALYSIS]</scope>
    <source>
        <tissue>Leukemic T-cell</tissue>
    </source>
</reference>
<reference key="23">
    <citation type="journal article" date="2010" name="Sci. Signal.">
        <title>Quantitative phosphoproteomics reveals widespread full phosphorylation site occupancy during mitosis.</title>
        <authorList>
            <person name="Olsen J.V."/>
            <person name="Vermeulen M."/>
            <person name="Santamaria A."/>
            <person name="Kumar C."/>
            <person name="Miller M.L."/>
            <person name="Jensen L.J."/>
            <person name="Gnad F."/>
            <person name="Cox J."/>
            <person name="Jensen T.S."/>
            <person name="Nigg E.A."/>
            <person name="Brunak S."/>
            <person name="Mann M."/>
        </authorList>
    </citation>
    <scope>PHOSPHORYLATION [LARGE SCALE ANALYSIS] AT SER-715</scope>
    <scope>IDENTIFICATION BY MASS SPECTROMETRY [LARGE SCALE ANALYSIS]</scope>
    <source>
        <tissue>Cervix carcinoma</tissue>
    </source>
</reference>
<reference key="24">
    <citation type="journal article" date="2011" name="BMC Syst. Biol.">
        <title>Initial characterization of the human central proteome.</title>
        <authorList>
            <person name="Burkard T.R."/>
            <person name="Planyavsky M."/>
            <person name="Kaupe I."/>
            <person name="Breitwieser F.P."/>
            <person name="Buerckstuemmer T."/>
            <person name="Bennett K.L."/>
            <person name="Superti-Furga G."/>
            <person name="Colinge J."/>
        </authorList>
    </citation>
    <scope>IDENTIFICATION BY MASS SPECTROMETRY [LARGE SCALE ANALYSIS]</scope>
</reference>
<reference key="25">
    <citation type="journal article" date="2011" name="Sci. Signal.">
        <title>System-wide temporal characterization of the proteome and phosphoproteome of human embryonic stem cell differentiation.</title>
        <authorList>
            <person name="Rigbolt K.T."/>
            <person name="Prokhorova T.A."/>
            <person name="Akimov V."/>
            <person name="Henningsen J."/>
            <person name="Johansen P.T."/>
            <person name="Kratchmarova I."/>
            <person name="Kassem M."/>
            <person name="Mann M."/>
            <person name="Olsen J.V."/>
            <person name="Blagoev B."/>
        </authorList>
    </citation>
    <scope>PHOSPHORYLATION [LARGE SCALE ANALYSIS] AT THR-365 AND SER-369</scope>
    <scope>IDENTIFICATION BY MASS SPECTROMETRY [LARGE SCALE ANALYSIS]</scope>
</reference>
<reference key="26">
    <citation type="journal article" date="2013" name="J. Proteome Res.">
        <title>Toward a comprehensive characterization of a human cancer cell phosphoproteome.</title>
        <authorList>
            <person name="Zhou H."/>
            <person name="Di Palma S."/>
            <person name="Preisinger C."/>
            <person name="Peng M."/>
            <person name="Polat A.N."/>
            <person name="Heck A.J."/>
            <person name="Mohammed S."/>
        </authorList>
    </citation>
    <scope>PHOSPHORYLATION [LARGE SCALE ANALYSIS] AT THR-365; SER-369; SER-415 AND SER-715</scope>
    <scope>IDENTIFICATION BY MASS SPECTROMETRY [LARGE SCALE ANALYSIS]</scope>
    <source>
        <tissue>Cervix carcinoma</tissue>
        <tissue>Erythroleukemia</tissue>
    </source>
</reference>
<reference key="27">
    <citation type="journal article" date="2014" name="J. Proteomics">
        <title>An enzyme assisted RP-RPLC approach for in-depth analysis of human liver phosphoproteome.</title>
        <authorList>
            <person name="Bian Y."/>
            <person name="Song C."/>
            <person name="Cheng K."/>
            <person name="Dong M."/>
            <person name="Wang F."/>
            <person name="Huang J."/>
            <person name="Sun D."/>
            <person name="Wang L."/>
            <person name="Ye M."/>
            <person name="Zou H."/>
        </authorList>
    </citation>
    <scope>PHOSPHORYLATION [LARGE SCALE ANALYSIS] AT SER-369; SER-386; SER-415 AND SER-715</scope>
    <scope>IDENTIFICATION BY MASS SPECTROMETRY [LARGE SCALE ANALYSIS]</scope>
    <source>
        <tissue>Liver</tissue>
    </source>
</reference>
<reference key="28">
    <citation type="journal article" date="2015" name="Nat. Commun.">
        <title>Crucial roles of RSK in cell motility by catalysing serine phosphorylation of EphA2.</title>
        <authorList>
            <person name="Zhou Y."/>
            <person name="Yamada N."/>
            <person name="Tanaka T."/>
            <person name="Hori T."/>
            <person name="Yokoyama S."/>
            <person name="Hayakawa Y."/>
            <person name="Yano S."/>
            <person name="Fukuoka J."/>
            <person name="Koizumi K."/>
            <person name="Saiki I."/>
            <person name="Sakurai H."/>
        </authorList>
    </citation>
    <scope>FUNCTION IN PHOSPHORYLATION OF EPHA2</scope>
</reference>
<reference key="29">
    <citation type="journal article" date="1996" name="Nature">
        <title>Mutations in the kinase Rsk-2 associated with Coffin-Lowry syndrome.</title>
        <authorList>
            <person name="Trivier E."/>
            <person name="de Cesare D."/>
            <person name="Jacquot S."/>
            <person name="Pannetier S."/>
            <person name="Zackai E."/>
            <person name="Young I."/>
            <person name="Mandel J.-L."/>
            <person name="Sassone-Corsi P."/>
            <person name="Hanauer A."/>
        </authorList>
    </citation>
    <scope>VARIANTS CLS VAL-75 AND ALA-227</scope>
</reference>
<reference key="30">
    <citation type="journal article" date="1998" name="Am. J. Hum. Genet.">
        <title>Mutation analysis of the RSK2 gene in Coffin-Lowry patients: extensive allelic heterogeneity and a high rate of De novo mutations.</title>
        <authorList>
            <person name="Jacquot S."/>
            <person name="Merienne K."/>
            <person name="de Cesare D."/>
            <person name="Pannetier S."/>
            <person name="Mandel J.-L."/>
            <person name="Sassone-Corsi P."/>
            <person name="Hanauer A."/>
        </authorList>
    </citation>
    <scope>VARIANTS CLS PHE-82; GLN-127; TYR-154; VAL-225 AND ASP-431</scope>
    <scope>VARIANT SER-38</scope>
</reference>
<reference key="31">
    <citation type="journal article" date="1999" name="Eur. J. Hum. Genet.">
        <title>Novel mutations in Rsk-2, the gene for Coffin-Lowry syndrome (CLS).</title>
        <authorList>
            <person name="Abidi F."/>
            <person name="Jacquot S."/>
            <person name="Lassiter C."/>
            <person name="Trivier E."/>
            <person name="Hanauer A."/>
            <person name="Schwartz C.E."/>
        </authorList>
    </citation>
    <scope>VARIANTS CLS TRP-114 AND GLN-729</scope>
</reference>
<reference key="32">
    <citation type="journal article" date="1999" name="J. Med. Genet.">
        <title>Unreported RSK2 missense mutation in two male sibs with an unusually mild form of Coffin-Lowry syndrome.</title>
        <authorList>
            <person name="Manouvrier-Hanu S."/>
            <person name="Amiel J."/>
            <person name="Jacquot S."/>
            <person name="Merienne K."/>
            <person name="Moerman A."/>
            <person name="Coeslier A."/>
            <person name="Labarriere F."/>
            <person name="Vallee L."/>
            <person name="Croquette M.F."/>
            <person name="Hanauer A."/>
        </authorList>
    </citation>
    <scope>VARIANT CLS LYS-189</scope>
</reference>
<reference key="33">
    <citation type="journal article" date="1999" name="Nat. Genet.">
        <title>A missense mutation in RPS6KA3 (RSK2) responsible for non-specific mental retardation.</title>
        <authorList>
            <person name="Merienne K."/>
            <person name="Jacquot S."/>
            <person name="Pannetier S."/>
            <person name="Zeniou M."/>
            <person name="Bankier A."/>
            <person name="Gecz J."/>
            <person name="Mandel J.L."/>
            <person name="Mulley J."/>
            <person name="Sassone-Corsi P."/>
            <person name="Hanauer A."/>
        </authorList>
    </citation>
    <scope>VARIANT XLID19 TRP-383</scope>
    <scope>CHARACTERIZATION OF VARIANT XLID19 TRP-383</scope>
</reference>
<reference key="34">
    <citation type="journal article" date="2003" name="Clin. Genet.">
        <title>Intronic L1 insertion and F268S, novel mutations in RPS6KA3 (RSK2) causing Coffin-Lowry syndrome.</title>
        <authorList>
            <person name="Martinez-Garay I."/>
            <person name="Ballesta M.J."/>
            <person name="Oltra S."/>
            <person name="Orellana C."/>
            <person name="Palomeque A."/>
            <person name="Molto M.D."/>
            <person name="Prieto F."/>
            <person name="Martinez F."/>
        </authorList>
    </citation>
    <scope>VARIANT CLS SER-268</scope>
</reference>
<reference key="35">
    <citation type="journal article" date="2004" name="Am. J. Med. Genet. A">
        <title>Cardiomyopathy in Coffin-Lowry syndrome.</title>
        <authorList>
            <person name="Facher J.J."/>
            <person name="Regier E.J."/>
            <person name="Jacobs G.H."/>
            <person name="Siwik E."/>
            <person name="Delaunoy J.P."/>
            <person name="Robin N.H."/>
        </authorList>
    </citation>
    <scope>VARIANT CLS ILE-477 DEL</scope>
</reference>
<reference key="36">
    <citation type="journal article" date="2006" name="Clin. Genet.">
        <title>Mutations in the RSK2(RPS6KA3) gene cause Coffin-Lowry syndrome and nonsyndromic X-linked mental retardation.</title>
        <authorList>
            <person name="Field M."/>
            <person name="Tarpey P."/>
            <person name="Boyle J."/>
            <person name="Edkins S."/>
            <person name="Goodship J."/>
            <person name="Luo Y."/>
            <person name="Moon J."/>
            <person name="Teague J."/>
            <person name="Stratton M.R."/>
            <person name="Futreal P.A."/>
            <person name="Wooster R."/>
            <person name="Raymond F.L."/>
            <person name="Turner G."/>
        </authorList>
    </citation>
    <scope>VARIANTS XLID19 SER-115; GLY-152 DEL AND ASP-202 DEL</scope>
</reference>
<reference key="37">
    <citation type="journal article" date="2006" name="Science">
        <title>The consensus coding sequences of human breast and colorectal cancers.</title>
        <authorList>
            <person name="Sjoeblom T."/>
            <person name="Jones S."/>
            <person name="Wood L.D."/>
            <person name="Parsons D.W."/>
            <person name="Lin J."/>
            <person name="Barber T.D."/>
            <person name="Mandelker D."/>
            <person name="Leary R.J."/>
            <person name="Ptak J."/>
            <person name="Silliman N."/>
            <person name="Szabo S."/>
            <person name="Buckhaults P."/>
            <person name="Farrell C."/>
            <person name="Meeh P."/>
            <person name="Markowitz S.D."/>
            <person name="Willis J."/>
            <person name="Dawson D."/>
            <person name="Willson J.K.V."/>
            <person name="Gazdar A.F."/>
            <person name="Hartigan J."/>
            <person name="Wu L."/>
            <person name="Liu C."/>
            <person name="Parmigiani G."/>
            <person name="Park B.H."/>
            <person name="Bachman K.E."/>
            <person name="Papadopoulos N."/>
            <person name="Vogelstein B."/>
            <person name="Kinzler K.W."/>
            <person name="Velculescu V.E."/>
        </authorList>
    </citation>
    <scope>VARIANT [LARGE SCALE ANALYSIS] VAL-416</scope>
</reference>
<reference key="38">
    <citation type="journal article" date="2007" name="Nature">
        <title>Patterns of somatic mutation in human cancer genomes.</title>
        <authorList>
            <person name="Greenman C."/>
            <person name="Stephens P."/>
            <person name="Smith R."/>
            <person name="Dalgliesh G.L."/>
            <person name="Hunter C."/>
            <person name="Bignell G."/>
            <person name="Davies H."/>
            <person name="Teague J."/>
            <person name="Butler A."/>
            <person name="Stevens C."/>
            <person name="Edkins S."/>
            <person name="O'Meara S."/>
            <person name="Vastrik I."/>
            <person name="Schmidt E.E."/>
            <person name="Avis T."/>
            <person name="Barthorpe S."/>
            <person name="Bhamra G."/>
            <person name="Buck G."/>
            <person name="Choudhury B."/>
            <person name="Clements J."/>
            <person name="Cole J."/>
            <person name="Dicks E."/>
            <person name="Forbes S."/>
            <person name="Gray K."/>
            <person name="Halliday K."/>
            <person name="Harrison R."/>
            <person name="Hills K."/>
            <person name="Hinton J."/>
            <person name="Jenkinson A."/>
            <person name="Jones D."/>
            <person name="Menzies A."/>
            <person name="Mironenko T."/>
            <person name="Perry J."/>
            <person name="Raine K."/>
            <person name="Richardson D."/>
            <person name="Shepherd R."/>
            <person name="Small A."/>
            <person name="Tofts C."/>
            <person name="Varian J."/>
            <person name="Webb T."/>
            <person name="West S."/>
            <person name="Widaa S."/>
            <person name="Yates A."/>
            <person name="Cahill D.P."/>
            <person name="Louis D.N."/>
            <person name="Goldstraw P."/>
            <person name="Nicholson A.G."/>
            <person name="Brasseur F."/>
            <person name="Looijenga L."/>
            <person name="Weber B.L."/>
            <person name="Chiew Y.-E."/>
            <person name="DeFazio A."/>
            <person name="Greaves M.F."/>
            <person name="Green A.R."/>
            <person name="Campbell P."/>
            <person name="Birney E."/>
            <person name="Easton D.F."/>
            <person name="Chenevix-Trench G."/>
            <person name="Tan M.-H."/>
            <person name="Khoo S.K."/>
            <person name="Teh B.T."/>
            <person name="Yuen S.T."/>
            <person name="Leung S.Y."/>
            <person name="Wooster R."/>
            <person name="Futreal P.A."/>
            <person name="Stratton M.R."/>
        </authorList>
    </citation>
    <scope>VARIANTS [LARGE SCALE ANALYSIS] SER-38; CYS-483; PHE-608 AND CYS-723</scope>
</reference>
<organism>
    <name type="scientific">Homo sapiens</name>
    <name type="common">Human</name>
    <dbReference type="NCBI Taxonomy" id="9606"/>
    <lineage>
        <taxon>Eukaryota</taxon>
        <taxon>Metazoa</taxon>
        <taxon>Chordata</taxon>
        <taxon>Craniata</taxon>
        <taxon>Vertebrata</taxon>
        <taxon>Euteleostomi</taxon>
        <taxon>Mammalia</taxon>
        <taxon>Eutheria</taxon>
        <taxon>Euarchontoglires</taxon>
        <taxon>Primates</taxon>
        <taxon>Haplorrhini</taxon>
        <taxon>Catarrhini</taxon>
        <taxon>Hominidae</taxon>
        <taxon>Homo</taxon>
    </lineage>
</organism>
<evidence type="ECO:0000250" key="1"/>
<evidence type="ECO:0000250" key="2">
    <source>
        <dbReference type="UniProtKB" id="P18654"/>
    </source>
</evidence>
<evidence type="ECO:0000255" key="3">
    <source>
        <dbReference type="PROSITE-ProRule" id="PRU00159"/>
    </source>
</evidence>
<evidence type="ECO:0000255" key="4">
    <source>
        <dbReference type="PROSITE-ProRule" id="PRU00618"/>
    </source>
</evidence>
<evidence type="ECO:0000256" key="5">
    <source>
        <dbReference type="SAM" id="MobiDB-lite"/>
    </source>
</evidence>
<evidence type="ECO:0000269" key="6">
    <source>
    </source>
</evidence>
<evidence type="ECO:0000269" key="7">
    <source>
    </source>
</evidence>
<evidence type="ECO:0000269" key="8">
    <source>
    </source>
</evidence>
<evidence type="ECO:0000269" key="9">
    <source>
    </source>
</evidence>
<evidence type="ECO:0000269" key="10">
    <source>
    </source>
</evidence>
<evidence type="ECO:0000269" key="11">
    <source>
    </source>
</evidence>
<evidence type="ECO:0000269" key="12">
    <source>
    </source>
</evidence>
<evidence type="ECO:0000269" key="13">
    <source>
    </source>
</evidence>
<evidence type="ECO:0000269" key="14">
    <source>
    </source>
</evidence>
<evidence type="ECO:0000269" key="15">
    <source>
    </source>
</evidence>
<evidence type="ECO:0000269" key="16">
    <source>
    </source>
</evidence>
<evidence type="ECO:0000269" key="17">
    <source>
    </source>
</evidence>
<evidence type="ECO:0000269" key="18">
    <source>
    </source>
</evidence>
<evidence type="ECO:0000269" key="19">
    <source>
    </source>
</evidence>
<evidence type="ECO:0000269" key="20">
    <source>
    </source>
</evidence>
<evidence type="ECO:0000269" key="21">
    <source>
    </source>
</evidence>
<evidence type="ECO:0000269" key="22">
    <source>
    </source>
</evidence>
<evidence type="ECO:0000269" key="23">
    <source>
    </source>
</evidence>
<evidence type="ECO:0000269" key="24">
    <source>
    </source>
</evidence>
<evidence type="ECO:0000303" key="25">
    <source>
    </source>
</evidence>
<evidence type="ECO:0000303" key="26">
    <source>
    </source>
</evidence>
<evidence type="ECO:0000305" key="27"/>
<evidence type="ECO:0007744" key="28">
    <source>
    </source>
</evidence>
<evidence type="ECO:0007744" key="29">
    <source>
    </source>
</evidence>
<evidence type="ECO:0007744" key="30">
    <source>
    </source>
</evidence>
<evidence type="ECO:0007744" key="31">
    <source>
    </source>
</evidence>
<evidence type="ECO:0007744" key="32">
    <source>
    </source>
</evidence>
<evidence type="ECO:0007744" key="33">
    <source>
    </source>
</evidence>
<evidence type="ECO:0007744" key="34">
    <source>
    </source>
</evidence>
<evidence type="ECO:0007744" key="35">
    <source>
    </source>
</evidence>
<evidence type="ECO:0007744" key="36">
    <source>
    </source>
</evidence>
<evidence type="ECO:0007829" key="37">
    <source>
        <dbReference type="PDB" id="4D9T"/>
    </source>
</evidence>
<evidence type="ECO:0007829" key="38">
    <source>
        <dbReference type="PDB" id="4D9U"/>
    </source>
</evidence>
<evidence type="ECO:0007829" key="39">
    <source>
        <dbReference type="PDB" id="4JG6"/>
    </source>
</evidence>
<evidence type="ECO:0007829" key="40">
    <source>
        <dbReference type="PDB" id="4JG7"/>
    </source>
</evidence>
<evidence type="ECO:0007829" key="41">
    <source>
        <dbReference type="PDB" id="4JG8"/>
    </source>
</evidence>
<evidence type="ECO:0007829" key="42">
    <source>
        <dbReference type="PDB" id="4NUS"/>
    </source>
</evidence>
<evidence type="ECO:0007829" key="43">
    <source>
        <dbReference type="PDB" id="4NW6"/>
    </source>
</evidence>
<evidence type="ECO:0007829" key="44">
    <source>
        <dbReference type="PDB" id="5D9K"/>
    </source>
</evidence>
<evidence type="ECO:0007829" key="45">
    <source>
        <dbReference type="PDB" id="5D9L"/>
    </source>
</evidence>
<evidence type="ECO:0007829" key="46">
    <source>
        <dbReference type="PDB" id="8EQ5"/>
    </source>
</evidence>
<evidence type="ECO:0007829" key="47">
    <source>
        <dbReference type="PDB" id="8XEY"/>
    </source>
</evidence>
<keyword id="KW-0002">3D-structure</keyword>
<keyword id="KW-0067">ATP-binding</keyword>
<keyword id="KW-0131">Cell cycle</keyword>
<keyword id="KW-0963">Cytoplasm</keyword>
<keyword id="KW-0225">Disease variant</keyword>
<keyword id="KW-0991">Intellectual disability</keyword>
<keyword id="KW-0418">Kinase</keyword>
<keyword id="KW-0460">Magnesium</keyword>
<keyword id="KW-0479">Metal-binding</keyword>
<keyword id="KW-0547">Nucleotide-binding</keyword>
<keyword id="KW-0539">Nucleus</keyword>
<keyword id="KW-0597">Phosphoprotein</keyword>
<keyword id="KW-1267">Proteomics identification</keyword>
<keyword id="KW-1185">Reference proteome</keyword>
<keyword id="KW-0677">Repeat</keyword>
<keyword id="KW-0723">Serine/threonine-protein kinase</keyword>
<keyword id="KW-0346">Stress response</keyword>
<keyword id="KW-0808">Transferase</keyword>
<name>KS6A3_HUMAN</name>
<gene>
    <name type="primary">RPS6KA3</name>
    <name type="synonym">ISPK1</name>
    <name type="synonym">MAPKAPK1B</name>
    <name type="synonym">RSK2</name>
</gene>
<protein>
    <recommendedName>
        <fullName>Ribosomal protein S6 kinase alpha-3</fullName>
        <shortName>S6K-alpha-3</shortName>
        <ecNumber evidence="16">2.7.11.1</ecNumber>
    </recommendedName>
    <alternativeName>
        <fullName>90 kDa ribosomal protein S6 kinase 3</fullName>
        <shortName>p90-RSK 3</shortName>
        <shortName>p90RSK3</shortName>
    </alternativeName>
    <alternativeName>
        <fullName>Insulin-stimulated protein kinase 1</fullName>
        <shortName>ISPK-1</shortName>
    </alternativeName>
    <alternativeName>
        <fullName>MAP kinase-activated protein kinase 1b</fullName>
        <shortName>MAPK-activated protein kinase 1b</shortName>
        <shortName>MAPKAP kinase 1b</shortName>
        <shortName>MAPKAPK-1b</shortName>
    </alternativeName>
    <alternativeName>
        <fullName>Ribosomal S6 kinase 2</fullName>
        <shortName>RSK-2</shortName>
    </alternativeName>
    <alternativeName>
        <fullName>pp90RSK2</fullName>
    </alternativeName>
</protein>